<reference key="1">
    <citation type="journal article" date="1996" name="Mol. Cell. Differ.">
        <title>Characterization of a novel melanoma differentiation associated gene, mda-9, that is down-regulated during terminal cell differentiation.</title>
        <authorList>
            <person name="Lin J.J."/>
            <person name="Jiang H."/>
            <person name="Fisher P.B."/>
        </authorList>
    </citation>
    <scope>NUCLEOTIDE SEQUENCE [MRNA] (ISOFORM 1)</scope>
</reference>
<reference key="2">
    <citation type="journal article" date="1997" name="Proc. Natl. Acad. Sci. U.S.A.">
        <title>Syntenin, a PDZ protein that binds syndecan cytoplasmic domains.</title>
        <authorList>
            <person name="Grootjans J.J."/>
            <person name="Zimmermann P."/>
            <person name="Reekmans G."/>
            <person name="Smets A."/>
            <person name="Degeest G."/>
            <person name="Duerr J."/>
            <person name="David G."/>
        </authorList>
    </citation>
    <scope>NUCLEOTIDE SEQUENCE [MRNA] (ISOFORM 1)</scope>
    <scope>INTERACTION WITH SDC2</scope>
    <scope>VARIANT SER-69</scope>
</reference>
<reference key="3">
    <citation type="submission" date="1997-01" db="EMBL/GenBank/DDBJ databases">
        <title>A new family of scaffold proteins.</title>
        <authorList>
            <person name="Burbelo P.D."/>
        </authorList>
    </citation>
    <scope>NUCLEOTIDE SEQUENCE [MRNA] (ISOFORM 1)</scope>
</reference>
<reference key="4">
    <citation type="journal article" date="1998" name="Gene">
        <title>Melanoma differentiation associated gene-9, mda-9, is a human gamma interferon responsive gene.</title>
        <authorList>
            <person name="Lin J.J."/>
            <person name="Jiang H."/>
            <person name="Fisher P.B."/>
        </authorList>
    </citation>
    <scope>NUCLEOTIDE SEQUENCE [MRNA] (ISOFORM 1)</scope>
</reference>
<reference key="5">
    <citation type="journal article" date="2004" name="Nat. Genet.">
        <title>Complete sequencing and characterization of 21,243 full-length human cDNAs.</title>
        <authorList>
            <person name="Ota T."/>
            <person name="Suzuki Y."/>
            <person name="Nishikawa T."/>
            <person name="Otsuki T."/>
            <person name="Sugiyama T."/>
            <person name="Irie R."/>
            <person name="Wakamatsu A."/>
            <person name="Hayashi K."/>
            <person name="Sato H."/>
            <person name="Nagai K."/>
            <person name="Kimura K."/>
            <person name="Makita H."/>
            <person name="Sekine M."/>
            <person name="Obayashi M."/>
            <person name="Nishi T."/>
            <person name="Shibahara T."/>
            <person name="Tanaka T."/>
            <person name="Ishii S."/>
            <person name="Yamamoto J."/>
            <person name="Saito K."/>
            <person name="Kawai Y."/>
            <person name="Isono Y."/>
            <person name="Nakamura Y."/>
            <person name="Nagahari K."/>
            <person name="Murakami K."/>
            <person name="Yasuda T."/>
            <person name="Iwayanagi T."/>
            <person name="Wagatsuma M."/>
            <person name="Shiratori A."/>
            <person name="Sudo H."/>
            <person name="Hosoiri T."/>
            <person name="Kaku Y."/>
            <person name="Kodaira H."/>
            <person name="Kondo H."/>
            <person name="Sugawara M."/>
            <person name="Takahashi M."/>
            <person name="Kanda K."/>
            <person name="Yokoi T."/>
            <person name="Furuya T."/>
            <person name="Kikkawa E."/>
            <person name="Omura Y."/>
            <person name="Abe K."/>
            <person name="Kamihara K."/>
            <person name="Katsuta N."/>
            <person name="Sato K."/>
            <person name="Tanikawa M."/>
            <person name="Yamazaki M."/>
            <person name="Ninomiya K."/>
            <person name="Ishibashi T."/>
            <person name="Yamashita H."/>
            <person name="Murakawa K."/>
            <person name="Fujimori K."/>
            <person name="Tanai H."/>
            <person name="Kimata M."/>
            <person name="Watanabe M."/>
            <person name="Hiraoka S."/>
            <person name="Chiba Y."/>
            <person name="Ishida S."/>
            <person name="Ono Y."/>
            <person name="Takiguchi S."/>
            <person name="Watanabe S."/>
            <person name="Yosida M."/>
            <person name="Hotuta T."/>
            <person name="Kusano J."/>
            <person name="Kanehori K."/>
            <person name="Takahashi-Fujii A."/>
            <person name="Hara H."/>
            <person name="Tanase T.-O."/>
            <person name="Nomura Y."/>
            <person name="Togiya S."/>
            <person name="Komai F."/>
            <person name="Hara R."/>
            <person name="Takeuchi K."/>
            <person name="Arita M."/>
            <person name="Imose N."/>
            <person name="Musashino K."/>
            <person name="Yuuki H."/>
            <person name="Oshima A."/>
            <person name="Sasaki N."/>
            <person name="Aotsuka S."/>
            <person name="Yoshikawa Y."/>
            <person name="Matsunawa H."/>
            <person name="Ichihara T."/>
            <person name="Shiohata N."/>
            <person name="Sano S."/>
            <person name="Moriya S."/>
            <person name="Momiyama H."/>
            <person name="Satoh N."/>
            <person name="Takami S."/>
            <person name="Terashima Y."/>
            <person name="Suzuki O."/>
            <person name="Nakagawa S."/>
            <person name="Senoh A."/>
            <person name="Mizoguchi H."/>
            <person name="Goto Y."/>
            <person name="Shimizu F."/>
            <person name="Wakebe H."/>
            <person name="Hishigaki H."/>
            <person name="Watanabe T."/>
            <person name="Sugiyama A."/>
            <person name="Takemoto M."/>
            <person name="Kawakami B."/>
            <person name="Yamazaki M."/>
            <person name="Watanabe K."/>
            <person name="Kumagai A."/>
            <person name="Itakura S."/>
            <person name="Fukuzumi Y."/>
            <person name="Fujimori Y."/>
            <person name="Komiyama M."/>
            <person name="Tashiro H."/>
            <person name="Tanigami A."/>
            <person name="Fujiwara T."/>
            <person name="Ono T."/>
            <person name="Yamada K."/>
            <person name="Fujii Y."/>
            <person name="Ozaki K."/>
            <person name="Hirao M."/>
            <person name="Ohmori Y."/>
            <person name="Kawabata A."/>
            <person name="Hikiji T."/>
            <person name="Kobatake N."/>
            <person name="Inagaki H."/>
            <person name="Ikema Y."/>
            <person name="Okamoto S."/>
            <person name="Okitani R."/>
            <person name="Kawakami T."/>
            <person name="Noguchi S."/>
            <person name="Itoh T."/>
            <person name="Shigeta K."/>
            <person name="Senba T."/>
            <person name="Matsumura K."/>
            <person name="Nakajima Y."/>
            <person name="Mizuno T."/>
            <person name="Morinaga M."/>
            <person name="Sasaki M."/>
            <person name="Togashi T."/>
            <person name="Oyama M."/>
            <person name="Hata H."/>
            <person name="Watanabe M."/>
            <person name="Komatsu T."/>
            <person name="Mizushima-Sugano J."/>
            <person name="Satoh T."/>
            <person name="Shirai Y."/>
            <person name="Takahashi Y."/>
            <person name="Nakagawa K."/>
            <person name="Okumura K."/>
            <person name="Nagase T."/>
            <person name="Nomura N."/>
            <person name="Kikuchi H."/>
            <person name="Masuho Y."/>
            <person name="Yamashita R."/>
            <person name="Nakai K."/>
            <person name="Yada T."/>
            <person name="Nakamura Y."/>
            <person name="Ohara O."/>
            <person name="Isogai T."/>
            <person name="Sugano S."/>
        </authorList>
    </citation>
    <scope>NUCLEOTIDE SEQUENCE [LARGE SCALE MRNA] (ISOFORMS 1 AND 3)</scope>
    <source>
        <tissue>Rectum</tissue>
        <tissue>Urinary bladder</tissue>
    </source>
</reference>
<reference key="6">
    <citation type="journal article" date="2006" name="Nature">
        <title>DNA sequence and analysis of human chromosome 8.</title>
        <authorList>
            <person name="Nusbaum C."/>
            <person name="Mikkelsen T.S."/>
            <person name="Zody M.C."/>
            <person name="Asakawa S."/>
            <person name="Taudien S."/>
            <person name="Garber M."/>
            <person name="Kodira C.D."/>
            <person name="Schueler M.G."/>
            <person name="Shimizu A."/>
            <person name="Whittaker C.A."/>
            <person name="Chang J.L."/>
            <person name="Cuomo C.A."/>
            <person name="Dewar K."/>
            <person name="FitzGerald M.G."/>
            <person name="Yang X."/>
            <person name="Allen N.R."/>
            <person name="Anderson S."/>
            <person name="Asakawa T."/>
            <person name="Blechschmidt K."/>
            <person name="Bloom T."/>
            <person name="Borowsky M.L."/>
            <person name="Butler J."/>
            <person name="Cook A."/>
            <person name="Corum B."/>
            <person name="DeArellano K."/>
            <person name="DeCaprio D."/>
            <person name="Dooley K.T."/>
            <person name="Dorris L. III"/>
            <person name="Engels R."/>
            <person name="Gloeckner G."/>
            <person name="Hafez N."/>
            <person name="Hagopian D.S."/>
            <person name="Hall J.L."/>
            <person name="Ishikawa S.K."/>
            <person name="Jaffe D.B."/>
            <person name="Kamat A."/>
            <person name="Kudoh J."/>
            <person name="Lehmann R."/>
            <person name="Lokitsang T."/>
            <person name="Macdonald P."/>
            <person name="Major J.E."/>
            <person name="Matthews C.D."/>
            <person name="Mauceli E."/>
            <person name="Menzel U."/>
            <person name="Mihalev A.H."/>
            <person name="Minoshima S."/>
            <person name="Murayama Y."/>
            <person name="Naylor J.W."/>
            <person name="Nicol R."/>
            <person name="Nguyen C."/>
            <person name="O'Leary S.B."/>
            <person name="O'Neill K."/>
            <person name="Parker S.C.J."/>
            <person name="Polley A."/>
            <person name="Raymond C.K."/>
            <person name="Reichwald K."/>
            <person name="Rodriguez J."/>
            <person name="Sasaki T."/>
            <person name="Schilhabel M."/>
            <person name="Siddiqui R."/>
            <person name="Smith C.L."/>
            <person name="Sneddon T.P."/>
            <person name="Talamas J.A."/>
            <person name="Tenzin P."/>
            <person name="Topham K."/>
            <person name="Venkataraman V."/>
            <person name="Wen G."/>
            <person name="Yamazaki S."/>
            <person name="Young S.K."/>
            <person name="Zeng Q."/>
            <person name="Zimmer A.R."/>
            <person name="Rosenthal A."/>
            <person name="Birren B.W."/>
            <person name="Platzer M."/>
            <person name="Shimizu N."/>
            <person name="Lander E.S."/>
        </authorList>
    </citation>
    <scope>NUCLEOTIDE SEQUENCE [LARGE SCALE GENOMIC DNA]</scope>
</reference>
<reference key="7">
    <citation type="submission" date="2005-07" db="EMBL/GenBank/DDBJ databases">
        <authorList>
            <person name="Mural R.J."/>
            <person name="Istrail S."/>
            <person name="Sutton G."/>
            <person name="Florea L."/>
            <person name="Halpern A.L."/>
            <person name="Mobarry C.M."/>
            <person name="Lippert R."/>
            <person name="Walenz B."/>
            <person name="Shatkay H."/>
            <person name="Dew I."/>
            <person name="Miller J.R."/>
            <person name="Flanigan M.J."/>
            <person name="Edwards N.J."/>
            <person name="Bolanos R."/>
            <person name="Fasulo D."/>
            <person name="Halldorsson B.V."/>
            <person name="Hannenhalli S."/>
            <person name="Turner R."/>
            <person name="Yooseph S."/>
            <person name="Lu F."/>
            <person name="Nusskern D.R."/>
            <person name="Shue B.C."/>
            <person name="Zheng X.H."/>
            <person name="Zhong F."/>
            <person name="Delcher A.L."/>
            <person name="Huson D.H."/>
            <person name="Kravitz S.A."/>
            <person name="Mouchard L."/>
            <person name="Reinert K."/>
            <person name="Remington K.A."/>
            <person name="Clark A.G."/>
            <person name="Waterman M.S."/>
            <person name="Eichler E.E."/>
            <person name="Adams M.D."/>
            <person name="Hunkapiller M.W."/>
            <person name="Myers E.W."/>
            <person name="Venter J.C."/>
        </authorList>
    </citation>
    <scope>NUCLEOTIDE SEQUENCE [LARGE SCALE GENOMIC DNA]</scope>
</reference>
<reference key="8">
    <citation type="journal article" date="2004" name="Genome Res.">
        <title>The status, quality, and expansion of the NIH full-length cDNA project: the Mammalian Gene Collection (MGC).</title>
        <authorList>
            <consortium name="The MGC Project Team"/>
        </authorList>
    </citation>
    <scope>NUCLEOTIDE SEQUENCE [LARGE SCALE MRNA] (ISOFORMS 1 AND 2)</scope>
    <source>
        <tissue>Brain</tissue>
    </source>
</reference>
<reference key="9">
    <citation type="submission" date="2009-02" db="UniProtKB">
        <authorList>
            <person name="Bienvenut W.V."/>
            <person name="Sumpton D.P."/>
            <person name="Lilla S."/>
            <person name="Ozanne B.W."/>
        </authorList>
    </citation>
    <scope>PROTEIN SEQUENCE OF 2-14; 218-229 AND 289-298</scope>
    <scope>CLEAVAGE OF INITIATOR METHIONINE</scope>
    <scope>ACETYLATION AT SER-2</scope>
    <scope>IDENTIFICATION BY MASS SPECTROMETRY</scope>
    <source>
        <tissue>Pre-B cell</tissue>
    </source>
</reference>
<reference key="10">
    <citation type="journal article" date="1998" name="Neuron">
        <title>PDZ proteins bind, cluster, and synaptically colocalize with Eph receptors and their ephrin ligands.</title>
        <authorList>
            <person name="Torres R."/>
            <person name="Firestein B.L."/>
            <person name="Dong H."/>
            <person name="Staudinger J."/>
            <person name="Olson E.N."/>
            <person name="Huganir R.L."/>
            <person name="Bredt D.S."/>
            <person name="Gale N.W."/>
            <person name="Yancopoulos G.D."/>
        </authorList>
    </citation>
    <scope>INTERACTION WITH EPHB1 AND EPHA7</scope>
</reference>
<reference key="11">
    <citation type="journal article" date="1999" name="Mol. Cell">
        <title>A role for a PDZ protein in the early secretory pathway for the targeting of proTGF-alpha to the cell surface.</title>
        <authorList>
            <person name="Fernandez-Larrea J."/>
            <person name="Merlos-Suarez A."/>
            <person name="Urena J.M."/>
            <person name="Baselga J."/>
            <person name="Arribas J."/>
        </authorList>
    </citation>
    <scope>FUNCTION</scope>
    <scope>INTERACTION WITH TGFA</scope>
</reference>
<reference key="12">
    <citation type="journal article" date="2000" name="J. Biol. Chem.">
        <title>Syntenin-syndecan binding requires syndecan-synteny and the co-operation of both PDZ domains of syntenin.</title>
        <authorList>
            <person name="Grootjans J.J."/>
            <person name="Reekmans G."/>
            <person name="Ceulemans H."/>
            <person name="David G."/>
        </authorList>
    </citation>
    <scope>INTERACTION WITH SYNDECANS; NRXN2 AND EPHB1</scope>
</reference>
<reference key="13">
    <citation type="journal article" date="2001" name="J. Biol. Chem.">
        <title>The neural cell recognition molecule neurofascin interacts with syntenin-1 but not with syntenin-2, both of which reveal self-associating activity.</title>
        <authorList>
            <person name="Koroll M."/>
            <person name="Rathjen F.G."/>
            <person name="Volkmer H."/>
        </authorList>
    </citation>
    <scope>INTERACTION WITH SDCBP2</scope>
    <source>
        <tissue>Fetal brain</tissue>
    </source>
</reference>
<reference key="14">
    <citation type="journal article" date="2001" name="J. Biol. Chem.">
        <title>Schwannomin isoform-1 interacts with syntenin via PDZ domains.</title>
        <authorList>
            <person name="Jannatipour M."/>
            <person name="Dion P."/>
            <person name="Khan S."/>
            <person name="Jindal H."/>
            <person name="Fan X."/>
            <person name="Laganiere J."/>
            <person name="Chishti A.H."/>
            <person name="Rouleau G.A."/>
        </authorList>
    </citation>
    <scope>INTERACTION WITH NF2</scope>
</reference>
<reference key="15">
    <citation type="journal article" date="2001" name="Mol. Biol. Cell">
        <title>Characterization of syntenin, a syndecan-binding PDZ protein, as a component of cell adhesion sites and microfilaments.</title>
        <authorList>
            <person name="Zimmermann P."/>
            <person name="Tomatis D."/>
            <person name="Rosas M."/>
            <person name="Grootjans J.J."/>
            <person name="Leenaerts I."/>
            <person name="Degeest G."/>
            <person name="Reekmans G."/>
            <person name="Coomans C."/>
            <person name="David G."/>
        </authorList>
    </citation>
    <scope>FUNCTION</scope>
    <scope>SUBCELLULAR LOCATION</scope>
</reference>
<reference key="16">
    <citation type="journal article" date="2001" name="Science">
        <title>Cytokine-specific transcriptional regulation through an IL-5Ralpha interacting protein.</title>
        <authorList>
            <person name="Geijsen N."/>
            <person name="Uings I.J."/>
            <person name="Pals C."/>
            <person name="Armstrong J."/>
            <person name="McKinnon M."/>
            <person name="Raaijmakers J.A.M."/>
            <person name="Lammers J.-W."/>
            <person name="Koenderman L."/>
            <person name="Coffer P.J."/>
        </authorList>
    </citation>
    <scope>FUNCTION</scope>
    <scope>INTERACTION WITH IL5RA</scope>
</reference>
<reference key="17">
    <citation type="journal article" date="2003" name="J. Proteome Res.">
        <title>Proteomic analysis of early melanosomes: identification of novel melanosomal proteins.</title>
        <authorList>
            <person name="Basrur V."/>
            <person name="Yang F."/>
            <person name="Kushimoto T."/>
            <person name="Higashimoto Y."/>
            <person name="Yasumoto K."/>
            <person name="Valencia J."/>
            <person name="Muller J."/>
            <person name="Vieira W.D."/>
            <person name="Watabe H."/>
            <person name="Shabanowitz J."/>
            <person name="Hearing V.J."/>
            <person name="Hunt D.F."/>
            <person name="Appella E."/>
        </authorList>
    </citation>
    <scope>SUBCELLULAR LOCATION [LARGE SCALE ANALYSIS]</scope>
    <source>
        <tissue>Melanoma</tissue>
    </source>
</reference>
<reference key="18">
    <citation type="journal article" date="2006" name="J. Proteome Res.">
        <title>Proteomic and bioinformatic characterization of the biogenesis and function of melanosomes.</title>
        <authorList>
            <person name="Chi A."/>
            <person name="Valencia J.C."/>
            <person name="Hu Z.-Z."/>
            <person name="Watabe H."/>
            <person name="Yamaguchi H."/>
            <person name="Mangini N.J."/>
            <person name="Huang H."/>
            <person name="Canfield V.A."/>
            <person name="Cheng K.C."/>
            <person name="Yang F."/>
            <person name="Abe R."/>
            <person name="Yamagishi S."/>
            <person name="Shabanowitz J."/>
            <person name="Hearing V.J."/>
            <person name="Wu C."/>
            <person name="Appella E."/>
            <person name="Hunt D.F."/>
        </authorList>
    </citation>
    <scope>SUBCELLULAR LOCATION [LARGE SCALE ANALYSIS]</scope>
    <source>
        <tissue>Melanoma</tissue>
    </source>
</reference>
<reference key="19">
    <citation type="journal article" date="2009" name="Anal. Chem.">
        <title>Lys-N and trypsin cover complementary parts of the phosphoproteome in a refined SCX-based approach.</title>
        <authorList>
            <person name="Gauci S."/>
            <person name="Helbig A.O."/>
            <person name="Slijper M."/>
            <person name="Krijgsveld J."/>
            <person name="Heck A.J."/>
            <person name="Mohammed S."/>
        </authorList>
    </citation>
    <scope>ACETYLATION [LARGE SCALE ANALYSIS] AT SER-2</scope>
    <scope>CLEAVAGE OF INITIATOR METHIONINE [LARGE SCALE ANALYSIS]</scope>
    <scope>IDENTIFICATION BY MASS SPECTROMETRY [LARGE SCALE ANALYSIS]</scope>
</reference>
<reference key="20">
    <citation type="journal article" date="2011" name="BMC Syst. Biol.">
        <title>Initial characterization of the human central proteome.</title>
        <authorList>
            <person name="Burkard T.R."/>
            <person name="Planyavsky M."/>
            <person name="Kaupe I."/>
            <person name="Breitwieser F.P."/>
            <person name="Buerckstuemmer T."/>
            <person name="Bennett K.L."/>
            <person name="Superti-Furga G."/>
            <person name="Colinge J."/>
        </authorList>
    </citation>
    <scope>IDENTIFICATION BY MASS SPECTROMETRY [LARGE SCALE ANALYSIS]</scope>
</reference>
<reference key="21">
    <citation type="journal article" date="2012" name="Nat. Cell Biol.">
        <title>Syndecan-syntenin-ALIX regulates the biogenesis of exosomes.</title>
        <authorList>
            <person name="Baietti M.F."/>
            <person name="Zhang Z."/>
            <person name="Mortier E."/>
            <person name="Melchior A."/>
            <person name="Degeest G."/>
            <person name="Geeraerts A."/>
            <person name="Ivarsson Y."/>
            <person name="Depoortere F."/>
            <person name="Coomans C."/>
            <person name="Vermeiren E."/>
            <person name="Zimmermann P."/>
            <person name="David G."/>
        </authorList>
    </citation>
    <scope>FUNCTION</scope>
    <scope>SUBCELLULAR LOCATION</scope>
    <scope>INTERACTION WITH PDCD6IP</scope>
</reference>
<reference key="22">
    <citation type="journal article" date="2013" name="J. Proteome Res.">
        <title>Toward a comprehensive characterization of a human cancer cell phosphoproteome.</title>
        <authorList>
            <person name="Zhou H."/>
            <person name="Di Palma S."/>
            <person name="Preisinger C."/>
            <person name="Peng M."/>
            <person name="Polat A.N."/>
            <person name="Heck A.J."/>
            <person name="Mohammed S."/>
        </authorList>
    </citation>
    <scope>PHOSPHORYLATION [LARGE SCALE ANALYSIS] AT SER-6</scope>
    <scope>IDENTIFICATION BY MASS SPECTROMETRY [LARGE SCALE ANALYSIS]</scope>
    <source>
        <tissue>Cervix carcinoma</tissue>
        <tissue>Erythroleukemia</tissue>
    </source>
</reference>
<reference key="23">
    <citation type="journal article" date="2014" name="J. Proteomics">
        <title>An enzyme assisted RP-RPLC approach for in-depth analysis of human liver phosphoproteome.</title>
        <authorList>
            <person name="Bian Y."/>
            <person name="Song C."/>
            <person name="Cheng K."/>
            <person name="Dong M."/>
            <person name="Wang F."/>
            <person name="Huang J."/>
            <person name="Sun D."/>
            <person name="Wang L."/>
            <person name="Ye M."/>
            <person name="Zou H."/>
        </authorList>
    </citation>
    <scope>PHOSPHORYLATION [LARGE SCALE ANALYSIS] AT TYR-46</scope>
    <scope>IDENTIFICATION BY MASS SPECTROMETRY [LARGE SCALE ANALYSIS]</scope>
    <source>
        <tissue>Liver</tissue>
    </source>
</reference>
<reference key="24">
    <citation type="journal article" date="2015" name="Biol. Cell">
        <title>Syntenin and syndecan in the biogenesis of exosomes.</title>
        <authorList>
            <person name="Friand V."/>
            <person name="David G."/>
            <person name="Zimmermann P."/>
        </authorList>
    </citation>
    <scope>REVIEW</scope>
</reference>
<reference key="25">
    <citation type="journal article" date="2015" name="Expert Opin. Ther. Targets">
        <title>Targeting tumor invasion: the roles of MDA-9/Syntenin.</title>
        <authorList>
            <person name="Kegelman T.P."/>
            <person name="Das S.K."/>
            <person name="Emdad L."/>
            <person name="Hu B."/>
            <person name="Menezes M.E."/>
            <person name="Bhoopathi P."/>
            <person name="Wang X.Y."/>
            <person name="Pellecchia M."/>
            <person name="Sarkar D."/>
            <person name="Fisher P.B."/>
        </authorList>
    </citation>
    <scope>REVIEW</scope>
</reference>
<reference key="26">
    <citation type="journal article" date="2015" name="Front. Pharmacol.">
        <title>Syntenin controls migration, growth, proliferation, and cell cycle progression in cancer cells.</title>
        <authorList>
            <person name="Kashyap R."/>
            <person name="Roucourt B."/>
            <person name="Lembo F."/>
            <person name="Fares J."/>
            <person name="Carcavilla A.M."/>
            <person name="Restouin A."/>
            <person name="Zimmermann P."/>
            <person name="Ghossoub R."/>
        </authorList>
    </citation>
    <scope>FUNCTION</scope>
</reference>
<reference key="27">
    <citation type="journal article" date="2016" name="Oncogene">
        <title>Syntenin regulates TGF-beta1-induced Smad activation and the epithelial-to-mesenchymal transition by inhibiting caveolin-mediated TGF-beta type I receptor internalization.</title>
        <authorList>
            <person name="Hwangbo C."/>
            <person name="Tae N."/>
            <person name="Lee S."/>
            <person name="Kim O."/>
            <person name="Park O.K."/>
            <person name="Kim J."/>
            <person name="Kwon S.H."/>
            <person name="Lee J.H."/>
        </authorList>
    </citation>
    <scope>FUNCTION</scope>
    <scope>SUBCELLULAR LOCATION</scope>
    <scope>INTERACTION WITH TGFBR1</scope>
    <scope>TISSUE SPECIFICITY</scope>
</reference>
<reference key="28">
    <citation type="journal article" date="2016" name="J. Cell. Physiol.">
        <title>MDA-9/syntenin control.</title>
        <authorList>
            <person name="Philley J.V."/>
            <person name="Kannan A."/>
            <person name="Dasgupta S."/>
        </authorList>
    </citation>
    <scope>REVIEW</scope>
    <scope>FUNCTION</scope>
</reference>
<reference key="29">
    <citation type="journal article" date="2003" name="Structure">
        <title>PDZ tandem of human syntenin: crystal structure and functional properties.</title>
        <authorList>
            <person name="Kang B.S."/>
            <person name="Cooper D.R."/>
            <person name="Jelen F."/>
            <person name="Devedjiev Y."/>
            <person name="Derewenda U."/>
            <person name="Dauter Z."/>
            <person name="Otlewski J."/>
            <person name="Derewenda Z.S."/>
        </authorList>
    </citation>
    <scope>X-RAY CRYSTALLOGRAPHY (1.94 ANGSTROMS) OF 113-273</scope>
</reference>
<reference key="30">
    <citation type="journal article" date="2003" name="Structure">
        <title>Molecular roots of degenerate specificity in syntenin's PDZ2 domain: reassessment of the PDZ recognition paradigm.</title>
        <authorList>
            <person name="Kang B.S."/>
            <person name="Cooper D.R."/>
            <person name="Devedjiev Y."/>
            <person name="Derewenda U."/>
            <person name="Derewenda Z.S."/>
        </authorList>
    </citation>
    <scope>X-RAY CRYSTALLOGRAPHY (1.35 ANGSTROMS) OF 197-270 IN COMPLEXES WITH IL5RA AND SDC4</scope>
</reference>
<reference key="31">
    <citation type="journal article" date="2004" name="J. Mol. Biol.">
        <title>The PDZ2 domain of syntenin at ultra-high resolution: bridging the gap between macromolecular and small molecule crystallography.</title>
        <authorList>
            <person name="Kang B.S."/>
            <person name="Devedjiev Y."/>
            <person name="Derewenda U."/>
            <person name="Derewenda Z.S."/>
        </authorList>
    </citation>
    <scope>X-RAY CRYSTALLOGRAPHY (0.73 ANGSTROMS) OF 197-273</scope>
</reference>
<reference key="32">
    <citation type="journal article" date="2006" name="Biochemistry">
        <title>The binding of the PDZ tandem of syntenin to target proteins.</title>
        <authorList>
            <person name="Grembecka J."/>
            <person name="Cierpicki T."/>
            <person name="Devedjiev Y."/>
            <person name="Derewenda U."/>
            <person name="Kang B.S."/>
            <person name="Bushweller J.H."/>
            <person name="Derewenda Z.S."/>
        </authorList>
    </citation>
    <scope>X-RAY CRYSTALLOGRAPHY (1.56 ANGSTROMS) OF 113-273 IN COMPLEXES WITH C-TERMINAL PEPTIDES FROM NEUREXIN; EPHB1 AND SDC4</scope>
</reference>
<reference key="33">
    <citation type="journal article" date="2016" name="Nat. Commun.">
        <title>Frizzled 7 and PIP2 binding by syntenin PDZ2 domain supports Frizzled 7 trafficking and signalling.</title>
        <authorList>
            <person name="Egea-Jimenez A.L."/>
            <person name="Gallardo R."/>
            <person name="Garcia-Pino A."/>
            <person name="Ivarsson Y."/>
            <person name="Wawrzyniak A.M."/>
            <person name="Kashyap R."/>
            <person name="Loris R."/>
            <person name="Schymkowitz J."/>
            <person name="Rousseau F."/>
            <person name="Zimmermann P."/>
        </authorList>
    </citation>
    <scope>X-RAY CRYSTALLOGRAPHY (2.45 ANGSTROMS) OF 111-275 IN COMPLEXES WITH C-TERMINAL PEPTIDES FROM FZD7 AND INOSITOL BISPHOSPHATE</scope>
    <scope>INTERACTION WITH FZD7</scope>
    <scope>MUTAGENESIS OF LYS-214; ASN-215 AND LYS-250</scope>
    <scope>SUBCELLULAR LOCATION</scope>
</reference>
<evidence type="ECO:0000250" key="1">
    <source>
        <dbReference type="UniProtKB" id="O08992"/>
    </source>
</evidence>
<evidence type="ECO:0000250" key="2">
    <source>
        <dbReference type="UniProtKB" id="Q9JI92"/>
    </source>
</evidence>
<evidence type="ECO:0000255" key="3">
    <source>
        <dbReference type="PROSITE-ProRule" id="PRU00143"/>
    </source>
</evidence>
<evidence type="ECO:0000269" key="4">
    <source>
    </source>
</evidence>
<evidence type="ECO:0000269" key="5">
    <source>
    </source>
</evidence>
<evidence type="ECO:0000269" key="6">
    <source>
    </source>
</evidence>
<evidence type="ECO:0000269" key="7">
    <source>
    </source>
</evidence>
<evidence type="ECO:0000269" key="8">
    <source>
    </source>
</evidence>
<evidence type="ECO:0000269" key="9">
    <source>
    </source>
</evidence>
<evidence type="ECO:0000269" key="10">
    <source>
    </source>
</evidence>
<evidence type="ECO:0000269" key="11">
    <source>
    </source>
</evidence>
<evidence type="ECO:0000269" key="12">
    <source>
    </source>
</evidence>
<evidence type="ECO:0000269" key="13">
    <source>
    </source>
</evidence>
<evidence type="ECO:0000269" key="14">
    <source>
    </source>
</evidence>
<evidence type="ECO:0000269" key="15">
    <source ref="9"/>
</evidence>
<evidence type="ECO:0000303" key="16">
    <source>
    </source>
</evidence>
<evidence type="ECO:0000303" key="17">
    <source>
    </source>
</evidence>
<evidence type="ECO:0000303" key="18">
    <source>
    </source>
</evidence>
<evidence type="ECO:0000305" key="19"/>
<evidence type="ECO:0007744" key="20">
    <source>
        <dbReference type="PDB" id="4Z33"/>
    </source>
</evidence>
<evidence type="ECO:0007744" key="21">
    <source>
    </source>
</evidence>
<evidence type="ECO:0007744" key="22">
    <source>
    </source>
</evidence>
<evidence type="ECO:0007744" key="23">
    <source>
    </source>
</evidence>
<evidence type="ECO:0007829" key="24">
    <source>
        <dbReference type="PDB" id="1N99"/>
    </source>
</evidence>
<evidence type="ECO:0007829" key="25">
    <source>
        <dbReference type="PDB" id="1R6J"/>
    </source>
</evidence>
<evidence type="ECO:0007829" key="26">
    <source>
        <dbReference type="PDB" id="7FSR"/>
    </source>
</evidence>
<evidence type="ECO:0007829" key="27">
    <source>
        <dbReference type="PDB" id="7FTA"/>
    </source>
</evidence>
<evidence type="ECO:0007829" key="28">
    <source>
        <dbReference type="PDB" id="8AAP"/>
    </source>
</evidence>
<evidence type="ECO:0007829" key="29">
    <source>
        <dbReference type="PDB" id="8BLU"/>
    </source>
</evidence>
<dbReference type="EMBL" id="AF006636">
    <property type="protein sequence ID" value="AAC52050.1"/>
    <property type="molecule type" value="mRNA"/>
</dbReference>
<dbReference type="EMBL" id="AF000652">
    <property type="protein sequence ID" value="AAB97144.1"/>
    <property type="molecule type" value="mRNA"/>
</dbReference>
<dbReference type="EMBL" id="U83463">
    <property type="protein sequence ID" value="AAB51246.1"/>
    <property type="molecule type" value="mRNA"/>
</dbReference>
<dbReference type="EMBL" id="AK300647">
    <property type="protein sequence ID" value="BAG62335.1"/>
    <property type="molecule type" value="mRNA"/>
</dbReference>
<dbReference type="EMBL" id="AK312274">
    <property type="protein sequence ID" value="BAG35204.1"/>
    <property type="molecule type" value="mRNA"/>
</dbReference>
<dbReference type="EMBL" id="AC068522">
    <property type="status" value="NOT_ANNOTATED_CDS"/>
    <property type="molecule type" value="Genomic_DNA"/>
</dbReference>
<dbReference type="EMBL" id="CH471068">
    <property type="protein sequence ID" value="EAW86814.1"/>
    <property type="molecule type" value="Genomic_DNA"/>
</dbReference>
<dbReference type="EMBL" id="BC113674">
    <property type="protein sequence ID" value="AAI13675.1"/>
    <property type="molecule type" value="mRNA"/>
</dbReference>
<dbReference type="EMBL" id="BC113676">
    <property type="protein sequence ID" value="AAI13677.1"/>
    <property type="molecule type" value="mRNA"/>
</dbReference>
<dbReference type="EMBL" id="BC143915">
    <property type="protein sequence ID" value="AAI43916.1"/>
    <property type="molecule type" value="mRNA"/>
</dbReference>
<dbReference type="EMBL" id="BC143916">
    <property type="protein sequence ID" value="AAI43917.1"/>
    <property type="molecule type" value="mRNA"/>
</dbReference>
<dbReference type="CCDS" id="CCDS47862.1">
    <molecule id="O00560-2"/>
</dbReference>
<dbReference type="CCDS" id="CCDS47863.1">
    <molecule id="O00560-3"/>
</dbReference>
<dbReference type="CCDS" id="CCDS6172.1">
    <molecule id="O00560-1"/>
</dbReference>
<dbReference type="PIR" id="JC6537">
    <property type="entry name" value="JC6537"/>
</dbReference>
<dbReference type="RefSeq" id="NP_001007068.1">
    <molecule id="O00560-1"/>
    <property type="nucleotide sequence ID" value="NM_001007067.2"/>
</dbReference>
<dbReference type="RefSeq" id="NP_001007069.1">
    <molecule id="O00560-3"/>
    <property type="nucleotide sequence ID" value="NM_001007068.2"/>
</dbReference>
<dbReference type="RefSeq" id="NP_001007070.1">
    <molecule id="O00560-2"/>
    <property type="nucleotide sequence ID" value="NM_001007069.2"/>
</dbReference>
<dbReference type="RefSeq" id="NP_001007071.1">
    <molecule id="O00560-2"/>
    <property type="nucleotide sequence ID" value="NM_001007070.2"/>
</dbReference>
<dbReference type="RefSeq" id="NP_005616.2">
    <molecule id="O00560-1"/>
    <property type="nucleotide sequence ID" value="NM_005625.4"/>
</dbReference>
<dbReference type="PDB" id="1N99">
    <property type="method" value="X-ray"/>
    <property type="resolution" value="1.94 A"/>
    <property type="chains" value="A/B=113-273"/>
</dbReference>
<dbReference type="PDB" id="1NTE">
    <property type="method" value="X-ray"/>
    <property type="resolution" value="1.24 A"/>
    <property type="chains" value="A=197-273"/>
</dbReference>
<dbReference type="PDB" id="1OBX">
    <property type="method" value="X-ray"/>
    <property type="resolution" value="1.35 A"/>
    <property type="chains" value="A=197-270"/>
</dbReference>
<dbReference type="PDB" id="1OBY">
    <property type="method" value="X-ray"/>
    <property type="resolution" value="1.85 A"/>
    <property type="chains" value="A/B=197-270"/>
</dbReference>
<dbReference type="PDB" id="1OBZ">
    <property type="method" value="X-ray"/>
    <property type="resolution" value="1.69 A"/>
    <property type="chains" value="A/B=113-273"/>
</dbReference>
<dbReference type="PDB" id="1R6J">
    <property type="method" value="X-ray"/>
    <property type="resolution" value="0.73 A"/>
    <property type="chains" value="A=197-273"/>
</dbReference>
<dbReference type="PDB" id="1V1T">
    <property type="method" value="X-ray"/>
    <property type="resolution" value="1.80 A"/>
    <property type="chains" value="A/B=113-273"/>
</dbReference>
<dbReference type="PDB" id="1W9E">
    <property type="method" value="X-ray"/>
    <property type="resolution" value="1.56 A"/>
    <property type="chains" value="A/B=113-273"/>
</dbReference>
<dbReference type="PDB" id="1W9O">
    <property type="method" value="X-ray"/>
    <property type="resolution" value="2.25 A"/>
    <property type="chains" value="A/B=113-273"/>
</dbReference>
<dbReference type="PDB" id="1W9Q">
    <property type="method" value="X-ray"/>
    <property type="resolution" value="1.70 A"/>
    <property type="chains" value="A/B=113-273"/>
</dbReference>
<dbReference type="PDB" id="1YBO">
    <property type="method" value="X-ray"/>
    <property type="resolution" value="2.30 A"/>
    <property type="chains" value="A/B=113-273"/>
</dbReference>
<dbReference type="PDB" id="4Z33">
    <property type="method" value="X-ray"/>
    <property type="resolution" value="2.45 A"/>
    <property type="chains" value="A/B=111-275"/>
</dbReference>
<dbReference type="PDB" id="6R9H">
    <property type="method" value="X-ray"/>
    <property type="resolution" value="2.00 A"/>
    <property type="chains" value="A/B/C/D=113-273"/>
</dbReference>
<dbReference type="PDB" id="6RLC">
    <property type="method" value="X-ray"/>
    <property type="resolution" value="2.20 A"/>
    <property type="chains" value="A/B/C/D=113-273"/>
</dbReference>
<dbReference type="PDB" id="7FSG">
    <property type="method" value="X-ray"/>
    <property type="resolution" value="2.02 A"/>
    <property type="chains" value="A/B/C/D=106-298"/>
</dbReference>
<dbReference type="PDB" id="7FSH">
    <property type="method" value="X-ray"/>
    <property type="resolution" value="2.11 A"/>
    <property type="chains" value="A/B/C/D=106-298"/>
</dbReference>
<dbReference type="PDB" id="7FSI">
    <property type="method" value="X-ray"/>
    <property type="resolution" value="2.31 A"/>
    <property type="chains" value="A/B/C/D=106-298"/>
</dbReference>
<dbReference type="PDB" id="7FSJ">
    <property type="method" value="X-ray"/>
    <property type="resolution" value="1.97 A"/>
    <property type="chains" value="A/B/C/D=106-298"/>
</dbReference>
<dbReference type="PDB" id="7FSK">
    <property type="method" value="X-ray"/>
    <property type="resolution" value="2.40 A"/>
    <property type="chains" value="A/B/C/D=106-298"/>
</dbReference>
<dbReference type="PDB" id="7FSL">
    <property type="method" value="X-ray"/>
    <property type="resolution" value="2.38 A"/>
    <property type="chains" value="A/B/C/D=106-298"/>
</dbReference>
<dbReference type="PDB" id="7FSM">
    <property type="method" value="X-ray"/>
    <property type="resolution" value="2.10 A"/>
    <property type="chains" value="A/B/C/D=106-298"/>
</dbReference>
<dbReference type="PDB" id="7FSN">
    <property type="method" value="X-ray"/>
    <property type="resolution" value="2.40 A"/>
    <property type="chains" value="A/B/C/D=106-298"/>
</dbReference>
<dbReference type="PDB" id="7FSO">
    <property type="method" value="X-ray"/>
    <property type="resolution" value="1.90 A"/>
    <property type="chains" value="A/B/C/D=106-298"/>
</dbReference>
<dbReference type="PDB" id="7FSP">
    <property type="method" value="X-ray"/>
    <property type="resolution" value="1.86 A"/>
    <property type="chains" value="A/B/C/D=106-298"/>
</dbReference>
<dbReference type="PDB" id="7FSQ">
    <property type="method" value="X-ray"/>
    <property type="resolution" value="2.07 A"/>
    <property type="chains" value="A/B/C/D=106-298"/>
</dbReference>
<dbReference type="PDB" id="7FSR">
    <property type="method" value="X-ray"/>
    <property type="resolution" value="2.29 A"/>
    <property type="chains" value="A/B/C/D=106-298"/>
</dbReference>
<dbReference type="PDB" id="7FSS">
    <property type="method" value="X-ray"/>
    <property type="resolution" value="2.11 A"/>
    <property type="chains" value="A/B/C/D=106-298"/>
</dbReference>
<dbReference type="PDB" id="7FST">
    <property type="method" value="X-ray"/>
    <property type="resolution" value="1.98 A"/>
    <property type="chains" value="A/B/C/D=106-298"/>
</dbReference>
<dbReference type="PDB" id="7FSU">
    <property type="method" value="X-ray"/>
    <property type="resolution" value="1.97 A"/>
    <property type="chains" value="A/B/C/D=106-298"/>
</dbReference>
<dbReference type="PDB" id="7FSV">
    <property type="method" value="X-ray"/>
    <property type="resolution" value="2.25 A"/>
    <property type="chains" value="A/B/C/D=106-298"/>
</dbReference>
<dbReference type="PDB" id="7FSW">
    <property type="method" value="X-ray"/>
    <property type="resolution" value="2.14 A"/>
    <property type="chains" value="A/B/C/D=106-298"/>
</dbReference>
<dbReference type="PDB" id="7FSX">
    <property type="method" value="X-ray"/>
    <property type="resolution" value="1.91 A"/>
    <property type="chains" value="A/B/C/D=106-298"/>
</dbReference>
<dbReference type="PDB" id="7FSY">
    <property type="method" value="X-ray"/>
    <property type="resolution" value="2.80 A"/>
    <property type="chains" value="A/B/C/D=106-298"/>
</dbReference>
<dbReference type="PDB" id="7FSZ">
    <property type="method" value="X-ray"/>
    <property type="resolution" value="2.05 A"/>
    <property type="chains" value="A/B/C/D=106-298"/>
</dbReference>
<dbReference type="PDB" id="7FT0">
    <property type="method" value="X-ray"/>
    <property type="resolution" value="2.45 A"/>
    <property type="chains" value="A/B/C/D=106-298"/>
</dbReference>
<dbReference type="PDB" id="7FT1">
    <property type="method" value="X-ray"/>
    <property type="resolution" value="2.11 A"/>
    <property type="chains" value="A/B/C/D=106-298"/>
</dbReference>
<dbReference type="PDB" id="7FT2">
    <property type="method" value="X-ray"/>
    <property type="resolution" value="2.04 A"/>
    <property type="chains" value="A/B/C/D=106-298"/>
</dbReference>
<dbReference type="PDB" id="7FT3">
    <property type="method" value="X-ray"/>
    <property type="resolution" value="2.05 A"/>
    <property type="chains" value="A/B/C/D=106-298"/>
</dbReference>
<dbReference type="PDB" id="7FT4">
    <property type="method" value="X-ray"/>
    <property type="resolution" value="2.17 A"/>
    <property type="chains" value="A/B/C/D=106-298"/>
</dbReference>
<dbReference type="PDB" id="7FT5">
    <property type="method" value="X-ray"/>
    <property type="resolution" value="1.77 A"/>
    <property type="chains" value="A/B/C/D=106-298"/>
</dbReference>
<dbReference type="PDB" id="7FT6">
    <property type="method" value="X-ray"/>
    <property type="resolution" value="1.85 A"/>
    <property type="chains" value="A/B/C/D=106-298"/>
</dbReference>
<dbReference type="PDB" id="7FT7">
    <property type="method" value="X-ray"/>
    <property type="resolution" value="1.78 A"/>
    <property type="chains" value="A/B/C/D=106-298"/>
</dbReference>
<dbReference type="PDB" id="7FT8">
    <property type="method" value="X-ray"/>
    <property type="resolution" value="2.40 A"/>
    <property type="chains" value="A/B/C/D=106-298"/>
</dbReference>
<dbReference type="PDB" id="7FT9">
    <property type="method" value="X-ray"/>
    <property type="resolution" value="1.77 A"/>
    <property type="chains" value="A/B/C/D=106-298"/>
</dbReference>
<dbReference type="PDB" id="7FTA">
    <property type="method" value="X-ray"/>
    <property type="resolution" value="2.03 A"/>
    <property type="chains" value="A/B/C/D=106-298"/>
</dbReference>
<dbReference type="PDB" id="7FTB">
    <property type="method" value="X-ray"/>
    <property type="resolution" value="2.22 A"/>
    <property type="chains" value="A/B/C/D=106-298"/>
</dbReference>
<dbReference type="PDB" id="7FTC">
    <property type="method" value="X-ray"/>
    <property type="resolution" value="1.87 A"/>
    <property type="chains" value="A/B/C/D=106-298"/>
</dbReference>
<dbReference type="PDB" id="7FTD">
    <property type="method" value="X-ray"/>
    <property type="resolution" value="1.80 A"/>
    <property type="chains" value="A/B/C/D=106-298"/>
</dbReference>
<dbReference type="PDB" id="8AAI">
    <property type="method" value="X-ray"/>
    <property type="resolution" value="2.76 A"/>
    <property type="chains" value="A/B/C/D=113-273"/>
</dbReference>
<dbReference type="PDB" id="8AAK">
    <property type="method" value="X-ray"/>
    <property type="resolution" value="2.55 A"/>
    <property type="chains" value="A/B=113-273"/>
</dbReference>
<dbReference type="PDB" id="8AAO">
    <property type="method" value="X-ray"/>
    <property type="resolution" value="2.47 A"/>
    <property type="chains" value="A/B=113-273"/>
</dbReference>
<dbReference type="PDB" id="8AAP">
    <property type="method" value="X-ray"/>
    <property type="resolution" value="2.17 A"/>
    <property type="chains" value="A/B=113-273"/>
</dbReference>
<dbReference type="PDB" id="8BLU">
    <property type="method" value="X-ray"/>
    <property type="resolution" value="1.50 A"/>
    <property type="chains" value="A/B/C/D=106-298"/>
</dbReference>
<dbReference type="PDB" id="8BLV">
    <property type="method" value="X-ray"/>
    <property type="resolution" value="1.50 A"/>
    <property type="chains" value="A/B=106-298"/>
</dbReference>
<dbReference type="PDB" id="8HCK">
    <property type="method" value="X-ray"/>
    <property type="resolution" value="2.00 A"/>
    <property type="chains" value="A=113-191"/>
</dbReference>
<dbReference type="PDBsum" id="1N99"/>
<dbReference type="PDBsum" id="1NTE"/>
<dbReference type="PDBsum" id="1OBX"/>
<dbReference type="PDBsum" id="1OBY"/>
<dbReference type="PDBsum" id="1OBZ"/>
<dbReference type="PDBsum" id="1R6J"/>
<dbReference type="PDBsum" id="1V1T"/>
<dbReference type="PDBsum" id="1W9E"/>
<dbReference type="PDBsum" id="1W9O"/>
<dbReference type="PDBsum" id="1W9Q"/>
<dbReference type="PDBsum" id="1YBO"/>
<dbReference type="PDBsum" id="4Z33"/>
<dbReference type="PDBsum" id="6R9H"/>
<dbReference type="PDBsum" id="6RLC"/>
<dbReference type="PDBsum" id="7FSG"/>
<dbReference type="PDBsum" id="7FSH"/>
<dbReference type="PDBsum" id="7FSI"/>
<dbReference type="PDBsum" id="7FSJ"/>
<dbReference type="PDBsum" id="7FSK"/>
<dbReference type="PDBsum" id="7FSL"/>
<dbReference type="PDBsum" id="7FSM"/>
<dbReference type="PDBsum" id="7FSN"/>
<dbReference type="PDBsum" id="7FSO"/>
<dbReference type="PDBsum" id="7FSP"/>
<dbReference type="PDBsum" id="7FSQ"/>
<dbReference type="PDBsum" id="7FSR"/>
<dbReference type="PDBsum" id="7FSS"/>
<dbReference type="PDBsum" id="7FST"/>
<dbReference type="PDBsum" id="7FSU"/>
<dbReference type="PDBsum" id="7FSV"/>
<dbReference type="PDBsum" id="7FSW"/>
<dbReference type="PDBsum" id="7FSX"/>
<dbReference type="PDBsum" id="7FSY"/>
<dbReference type="PDBsum" id="7FSZ"/>
<dbReference type="PDBsum" id="7FT0"/>
<dbReference type="PDBsum" id="7FT1"/>
<dbReference type="PDBsum" id="7FT2"/>
<dbReference type="PDBsum" id="7FT3"/>
<dbReference type="PDBsum" id="7FT4"/>
<dbReference type="PDBsum" id="7FT5"/>
<dbReference type="PDBsum" id="7FT6"/>
<dbReference type="PDBsum" id="7FT7"/>
<dbReference type="PDBsum" id="7FT8"/>
<dbReference type="PDBsum" id="7FT9"/>
<dbReference type="PDBsum" id="7FTA"/>
<dbReference type="PDBsum" id="7FTB"/>
<dbReference type="PDBsum" id="7FTC"/>
<dbReference type="PDBsum" id="7FTD"/>
<dbReference type="PDBsum" id="8AAI"/>
<dbReference type="PDBsum" id="8AAK"/>
<dbReference type="PDBsum" id="8AAO"/>
<dbReference type="PDBsum" id="8AAP"/>
<dbReference type="PDBsum" id="8BLU"/>
<dbReference type="PDBsum" id="8BLV"/>
<dbReference type="PDBsum" id="8HCK"/>
<dbReference type="SMR" id="O00560"/>
<dbReference type="BioGRID" id="112287">
    <property type="interactions" value="445"/>
</dbReference>
<dbReference type="ComplexPortal" id="CPX-3282">
    <property type="entry name" value="Syndecan-1-syntenin-1-ALIX complex"/>
</dbReference>
<dbReference type="CORUM" id="O00560"/>
<dbReference type="DIP" id="DIP-42705N"/>
<dbReference type="FunCoup" id="O00560">
    <property type="interactions" value="1523"/>
</dbReference>
<dbReference type="IntAct" id="O00560">
    <property type="interactions" value="422"/>
</dbReference>
<dbReference type="MINT" id="O00560"/>
<dbReference type="STRING" id="9606.ENSP00000428184"/>
<dbReference type="BindingDB" id="O00560"/>
<dbReference type="ChEMBL" id="CHEMBL4739667"/>
<dbReference type="MoonDB" id="O00560">
    <property type="type" value="Predicted"/>
</dbReference>
<dbReference type="TCDB" id="8.A.24.2.1">
    <property type="family name" value="the ezrin/radixin/moesin-binding phosphoprotein 50 (ebp50) family"/>
</dbReference>
<dbReference type="GlyGen" id="O00560">
    <property type="glycosylation" value="1 site, 1 O-linked glycan (1 site)"/>
</dbReference>
<dbReference type="iPTMnet" id="O00560"/>
<dbReference type="PhosphoSitePlus" id="O00560"/>
<dbReference type="SwissPalm" id="O00560"/>
<dbReference type="BioMuta" id="SDCBP"/>
<dbReference type="jPOST" id="O00560"/>
<dbReference type="MassIVE" id="O00560"/>
<dbReference type="PaxDb" id="9606-ENSP00000260130"/>
<dbReference type="PeptideAtlas" id="O00560"/>
<dbReference type="ProteomicsDB" id="47974">
    <molecule id="O00560-1"/>
</dbReference>
<dbReference type="ProteomicsDB" id="47975">
    <molecule id="O00560-2"/>
</dbReference>
<dbReference type="ProteomicsDB" id="47976">
    <molecule id="O00560-3"/>
</dbReference>
<dbReference type="Pumba" id="O00560"/>
<dbReference type="TopDownProteomics" id="O00560-1">
    <molecule id="O00560-1"/>
</dbReference>
<dbReference type="Antibodypedia" id="3216">
    <property type="antibodies" value="544 antibodies from 37 providers"/>
</dbReference>
<dbReference type="DNASU" id="6386"/>
<dbReference type="Ensembl" id="ENST00000260130.9">
    <molecule id="O00560-1"/>
    <property type="protein sequence ID" value="ENSP00000260130.4"/>
    <property type="gene ID" value="ENSG00000137575.12"/>
</dbReference>
<dbReference type="Ensembl" id="ENST00000413219.6">
    <molecule id="O00560-1"/>
    <property type="protein sequence ID" value="ENSP00000411771.2"/>
    <property type="gene ID" value="ENSG00000137575.12"/>
</dbReference>
<dbReference type="Ensembl" id="ENST00000424270.6">
    <molecule id="O00560-3"/>
    <property type="protein sequence ID" value="ENSP00000395351.2"/>
    <property type="gene ID" value="ENSG00000137575.12"/>
</dbReference>
<dbReference type="Ensembl" id="ENST00000447182.6">
    <molecule id="O00560-2"/>
    <property type="protein sequence ID" value="ENSP00000409288.2"/>
    <property type="gene ID" value="ENSG00000137575.12"/>
</dbReference>
<dbReference type="GeneID" id="6386"/>
<dbReference type="KEGG" id="hsa:6386"/>
<dbReference type="MANE-Select" id="ENST00000260130.9">
    <property type="protein sequence ID" value="ENSP00000260130.4"/>
    <property type="RefSeq nucleotide sequence ID" value="NM_005625.4"/>
    <property type="RefSeq protein sequence ID" value="NP_005616.2"/>
</dbReference>
<dbReference type="UCSC" id="uc003xtn.3">
    <molecule id="O00560-1"/>
    <property type="organism name" value="human"/>
</dbReference>
<dbReference type="AGR" id="HGNC:10662"/>
<dbReference type="CTD" id="6386"/>
<dbReference type="DisGeNET" id="6386"/>
<dbReference type="GeneCards" id="SDCBP"/>
<dbReference type="HGNC" id="HGNC:10662">
    <property type="gene designation" value="SDCBP"/>
</dbReference>
<dbReference type="HPA" id="ENSG00000137575">
    <property type="expression patterns" value="Low tissue specificity"/>
</dbReference>
<dbReference type="MIM" id="602217">
    <property type="type" value="gene"/>
</dbReference>
<dbReference type="neXtProt" id="NX_O00560"/>
<dbReference type="OpenTargets" id="ENSG00000137575"/>
<dbReference type="PharmGKB" id="PA35592"/>
<dbReference type="VEuPathDB" id="HostDB:ENSG00000137575"/>
<dbReference type="eggNOG" id="KOG0849">
    <property type="taxonomic scope" value="Eukaryota"/>
</dbReference>
<dbReference type="GeneTree" id="ENSGT00940000154502"/>
<dbReference type="InParanoid" id="O00560"/>
<dbReference type="OMA" id="HKMIKKA"/>
<dbReference type="OrthoDB" id="10059177at2759"/>
<dbReference type="PAN-GO" id="O00560">
    <property type="GO annotations" value="5 GO annotations based on evolutionary models"/>
</dbReference>
<dbReference type="PhylomeDB" id="O00560"/>
<dbReference type="TreeFam" id="TF327131"/>
<dbReference type="PathwayCommons" id="O00560"/>
<dbReference type="Reactome" id="R-HSA-3928664">
    <property type="pathway name" value="Ephrin signaling"/>
</dbReference>
<dbReference type="Reactome" id="R-HSA-447043">
    <property type="pathway name" value="Neurofascin interactions"/>
</dbReference>
<dbReference type="Reactome" id="R-HSA-5213460">
    <property type="pathway name" value="RIPK1-mediated regulated necrosis"/>
</dbReference>
<dbReference type="Reactome" id="R-HSA-5675482">
    <property type="pathway name" value="Regulation of necroptotic cell death"/>
</dbReference>
<dbReference type="Reactome" id="R-HSA-6798695">
    <property type="pathway name" value="Neutrophil degranulation"/>
</dbReference>
<dbReference type="SignaLink" id="O00560"/>
<dbReference type="SIGNOR" id="O00560"/>
<dbReference type="BioGRID-ORCS" id="6386">
    <property type="hits" value="21 hits in 1157 CRISPR screens"/>
</dbReference>
<dbReference type="CD-CODE" id="FB4E32DD">
    <property type="entry name" value="Presynaptic clusters and postsynaptic densities"/>
</dbReference>
<dbReference type="ChiTaRS" id="SDCBP">
    <property type="organism name" value="human"/>
</dbReference>
<dbReference type="EvolutionaryTrace" id="O00560"/>
<dbReference type="GeneWiki" id="SDCBP"/>
<dbReference type="GenomeRNAi" id="6386"/>
<dbReference type="Pharos" id="O00560">
    <property type="development level" value="Tchem"/>
</dbReference>
<dbReference type="PRO" id="PR:O00560"/>
<dbReference type="Proteomes" id="UP000005640">
    <property type="component" value="Chromosome 8"/>
</dbReference>
<dbReference type="RNAct" id="O00560">
    <property type="molecule type" value="protein"/>
</dbReference>
<dbReference type="Bgee" id="ENSG00000137575">
    <property type="expression patterns" value="Expressed in pigmented layer of retina and 210 other cell types or tissues"/>
</dbReference>
<dbReference type="ExpressionAtlas" id="O00560">
    <property type="expression patterns" value="baseline and differential"/>
</dbReference>
<dbReference type="GO" id="GO:0005912">
    <property type="term" value="C:adherens junction"/>
    <property type="evidence" value="ECO:0000303"/>
    <property type="project" value="UniProtKB"/>
</dbReference>
<dbReference type="GO" id="GO:0035578">
    <property type="term" value="C:azurophil granule lumen"/>
    <property type="evidence" value="ECO:0000304"/>
    <property type="project" value="Reactome"/>
</dbReference>
<dbReference type="GO" id="GO:0072562">
    <property type="term" value="C:blood microparticle"/>
    <property type="evidence" value="ECO:0007005"/>
    <property type="project" value="UniProtKB"/>
</dbReference>
<dbReference type="GO" id="GO:0005737">
    <property type="term" value="C:cytoplasm"/>
    <property type="evidence" value="ECO:0000314"/>
    <property type="project" value="BHF-UCL"/>
</dbReference>
<dbReference type="GO" id="GO:0005856">
    <property type="term" value="C:cytoskeleton"/>
    <property type="evidence" value="ECO:0000303"/>
    <property type="project" value="UniProtKB"/>
</dbReference>
<dbReference type="GO" id="GO:0005829">
    <property type="term" value="C:cytosol"/>
    <property type="evidence" value="ECO:0000314"/>
    <property type="project" value="HPA"/>
</dbReference>
<dbReference type="GO" id="GO:0005789">
    <property type="term" value="C:endoplasmic reticulum membrane"/>
    <property type="evidence" value="ECO:0007669"/>
    <property type="project" value="UniProtKB-SubCell"/>
</dbReference>
<dbReference type="GO" id="GO:0070062">
    <property type="term" value="C:extracellular exosome"/>
    <property type="evidence" value="ECO:0000314"/>
    <property type="project" value="UniProtKB"/>
</dbReference>
<dbReference type="GO" id="GO:0005576">
    <property type="term" value="C:extracellular region"/>
    <property type="evidence" value="ECO:0000304"/>
    <property type="project" value="Reactome"/>
</dbReference>
<dbReference type="GO" id="GO:0005615">
    <property type="term" value="C:extracellular space"/>
    <property type="evidence" value="ECO:0007005"/>
    <property type="project" value="UniProtKB"/>
</dbReference>
<dbReference type="GO" id="GO:1903561">
    <property type="term" value="C:extracellular vesicle"/>
    <property type="evidence" value="ECO:0007005"/>
    <property type="project" value="UniProtKB"/>
</dbReference>
<dbReference type="GO" id="GO:0005925">
    <property type="term" value="C:focal adhesion"/>
    <property type="evidence" value="ECO:0007669"/>
    <property type="project" value="UniProtKB-SubCell"/>
</dbReference>
<dbReference type="GO" id="GO:0005895">
    <property type="term" value="C:interleukin-5 receptor complex"/>
    <property type="evidence" value="ECO:0000250"/>
    <property type="project" value="UniProtKB"/>
</dbReference>
<dbReference type="GO" id="GO:0042470">
    <property type="term" value="C:melanosome"/>
    <property type="evidence" value="ECO:0007669"/>
    <property type="project" value="UniProtKB-SubCell"/>
</dbReference>
<dbReference type="GO" id="GO:0016020">
    <property type="term" value="C:membrane"/>
    <property type="evidence" value="ECO:0000303"/>
    <property type="project" value="UniProtKB"/>
</dbReference>
<dbReference type="GO" id="GO:0045121">
    <property type="term" value="C:membrane raft"/>
    <property type="evidence" value="ECO:0000314"/>
    <property type="project" value="UniProtKB"/>
</dbReference>
<dbReference type="GO" id="GO:0031965">
    <property type="term" value="C:nuclear membrane"/>
    <property type="evidence" value="ECO:0000314"/>
    <property type="project" value="HPA"/>
</dbReference>
<dbReference type="GO" id="GO:0005654">
    <property type="term" value="C:nucleoplasm"/>
    <property type="evidence" value="ECO:0000314"/>
    <property type="project" value="HPA"/>
</dbReference>
<dbReference type="GO" id="GO:0005634">
    <property type="term" value="C:nucleus"/>
    <property type="evidence" value="ECO:0000303"/>
    <property type="project" value="UniProtKB"/>
</dbReference>
<dbReference type="GO" id="GO:0005886">
    <property type="term" value="C:plasma membrane"/>
    <property type="evidence" value="ECO:0000314"/>
    <property type="project" value="UniProtKB"/>
</dbReference>
<dbReference type="GO" id="GO:0045202">
    <property type="term" value="C:synapse"/>
    <property type="evidence" value="ECO:0007669"/>
    <property type="project" value="GOC"/>
</dbReference>
<dbReference type="GO" id="GO:0008093">
    <property type="term" value="F:cytoskeletal anchor activity"/>
    <property type="evidence" value="ECO:0000303"/>
    <property type="project" value="UniProtKB"/>
</dbReference>
<dbReference type="GO" id="GO:0005109">
    <property type="term" value="F:frizzled binding"/>
    <property type="evidence" value="ECO:0000353"/>
    <property type="project" value="BHF-UCL"/>
</dbReference>
<dbReference type="GO" id="GO:0042802">
    <property type="term" value="F:identical protein binding"/>
    <property type="evidence" value="ECO:0000353"/>
    <property type="project" value="IntAct"/>
</dbReference>
<dbReference type="GO" id="GO:0005137">
    <property type="term" value="F:interleukin-5 receptor binding"/>
    <property type="evidence" value="ECO:0000250"/>
    <property type="project" value="UniProtKB"/>
</dbReference>
<dbReference type="GO" id="GO:0005546">
    <property type="term" value="F:phosphatidylinositol-4,5-bisphosphate binding"/>
    <property type="evidence" value="ECO:0000314"/>
    <property type="project" value="UniProtKB"/>
</dbReference>
<dbReference type="GO" id="GO:0046982">
    <property type="term" value="F:protein heterodimerization activity"/>
    <property type="evidence" value="ECO:0000353"/>
    <property type="project" value="UniProtKB"/>
</dbReference>
<dbReference type="GO" id="GO:0140311">
    <property type="term" value="F:protein sequestering activity"/>
    <property type="evidence" value="ECO:0000314"/>
    <property type="project" value="UniProtKB"/>
</dbReference>
<dbReference type="GO" id="GO:0045545">
    <property type="term" value="F:syndecan binding"/>
    <property type="evidence" value="ECO:0000353"/>
    <property type="project" value="UniProtKB"/>
</dbReference>
<dbReference type="GO" id="GO:0030036">
    <property type="term" value="P:actin cytoskeleton organization"/>
    <property type="evidence" value="ECO:0000303"/>
    <property type="project" value="UniProtKB"/>
</dbReference>
<dbReference type="GO" id="GO:0007268">
    <property type="term" value="P:chemical synaptic transmission"/>
    <property type="evidence" value="ECO:0000303"/>
    <property type="project" value="UniProtKB"/>
</dbReference>
<dbReference type="GO" id="GO:0035556">
    <property type="term" value="P:intracellular signal transduction"/>
    <property type="evidence" value="ECO:0000303"/>
    <property type="project" value="UniProtKB"/>
</dbReference>
<dbReference type="GO" id="GO:0002091">
    <property type="term" value="P:negative regulation of receptor internalization"/>
    <property type="evidence" value="ECO:0000315"/>
    <property type="project" value="UniProtKB"/>
</dbReference>
<dbReference type="GO" id="GO:0000122">
    <property type="term" value="P:negative regulation of transcription by RNA polymerase II"/>
    <property type="evidence" value="ECO:0000314"/>
    <property type="project" value="UniProtKB"/>
</dbReference>
<dbReference type="GO" id="GO:0030307">
    <property type="term" value="P:positive regulation of cell growth"/>
    <property type="evidence" value="ECO:0000315"/>
    <property type="project" value="UniProtKB"/>
</dbReference>
<dbReference type="GO" id="GO:0030335">
    <property type="term" value="P:positive regulation of cell migration"/>
    <property type="evidence" value="ECO:0000315"/>
    <property type="project" value="UniProtKB"/>
</dbReference>
<dbReference type="GO" id="GO:0008284">
    <property type="term" value="P:positive regulation of cell population proliferation"/>
    <property type="evidence" value="ECO:0000315"/>
    <property type="project" value="UniProtKB"/>
</dbReference>
<dbReference type="GO" id="GO:0010718">
    <property type="term" value="P:positive regulation of epithelial to mesenchymal transition"/>
    <property type="evidence" value="ECO:0000315"/>
    <property type="project" value="UniProtKB"/>
</dbReference>
<dbReference type="GO" id="GO:1903543">
    <property type="term" value="P:positive regulation of exosomal secretion"/>
    <property type="evidence" value="ECO:0000315"/>
    <property type="project" value="UniProtKB"/>
</dbReference>
<dbReference type="GO" id="GO:1903553">
    <property type="term" value="P:positive regulation of extracellular exosome assembly"/>
    <property type="evidence" value="ECO:0000315"/>
    <property type="project" value="UniProtKB"/>
</dbReference>
<dbReference type="GO" id="GO:0046330">
    <property type="term" value="P:positive regulation of JNK cascade"/>
    <property type="evidence" value="ECO:0000305"/>
    <property type="project" value="BHF-UCL"/>
</dbReference>
<dbReference type="GO" id="GO:0042327">
    <property type="term" value="P:positive regulation of phosphorylation"/>
    <property type="evidence" value="ECO:0000314"/>
    <property type="project" value="BHF-UCL"/>
</dbReference>
<dbReference type="GO" id="GO:0030511">
    <property type="term" value="P:positive regulation of transforming growth factor beta receptor signaling pathway"/>
    <property type="evidence" value="ECO:0000315"/>
    <property type="project" value="UniProtKB"/>
</dbReference>
<dbReference type="GO" id="GO:0006612">
    <property type="term" value="P:protein targeting to membrane"/>
    <property type="evidence" value="ECO:0000303"/>
    <property type="project" value="UniProtKB"/>
</dbReference>
<dbReference type="GO" id="GO:0007265">
    <property type="term" value="P:Ras protein signal transduction"/>
    <property type="evidence" value="ECO:0007669"/>
    <property type="project" value="Ensembl"/>
</dbReference>
<dbReference type="GO" id="GO:0007346">
    <property type="term" value="P:regulation of mitotic cell cycle"/>
    <property type="evidence" value="ECO:0000315"/>
    <property type="project" value="UniProtKB"/>
</dbReference>
<dbReference type="GO" id="GO:0006930">
    <property type="term" value="P:substrate-dependent cell migration, cell extension"/>
    <property type="evidence" value="ECO:0000303"/>
    <property type="project" value="UniProtKB"/>
</dbReference>
<dbReference type="CDD" id="cd06721">
    <property type="entry name" value="PDZ1_syntenin-like"/>
    <property type="match status" value="1"/>
</dbReference>
<dbReference type="CDD" id="cd06794">
    <property type="entry name" value="PDZ2_syntenin-like"/>
    <property type="match status" value="1"/>
</dbReference>
<dbReference type="FunFam" id="2.30.42.10:FF:000043">
    <property type="entry name" value="Syntenin-1 isoform X1"/>
    <property type="match status" value="1"/>
</dbReference>
<dbReference type="FunFam" id="2.30.42.10:FF:000065">
    <property type="entry name" value="syntenin-1 isoform X1"/>
    <property type="match status" value="1"/>
</dbReference>
<dbReference type="Gene3D" id="2.30.42.10">
    <property type="match status" value="2"/>
</dbReference>
<dbReference type="InterPro" id="IPR051230">
    <property type="entry name" value="APP-Binding"/>
</dbReference>
<dbReference type="InterPro" id="IPR001478">
    <property type="entry name" value="PDZ"/>
</dbReference>
<dbReference type="InterPro" id="IPR036034">
    <property type="entry name" value="PDZ_sf"/>
</dbReference>
<dbReference type="PANTHER" id="PTHR12345">
    <property type="entry name" value="SYNTENIN RELATED"/>
    <property type="match status" value="1"/>
</dbReference>
<dbReference type="PANTHER" id="PTHR12345:SF10">
    <property type="entry name" value="SYNTENIN-1"/>
    <property type="match status" value="1"/>
</dbReference>
<dbReference type="Pfam" id="PF00595">
    <property type="entry name" value="PDZ"/>
    <property type="match status" value="2"/>
</dbReference>
<dbReference type="SMART" id="SM00228">
    <property type="entry name" value="PDZ"/>
    <property type="match status" value="2"/>
</dbReference>
<dbReference type="SUPFAM" id="SSF50156">
    <property type="entry name" value="PDZ domain-like"/>
    <property type="match status" value="2"/>
</dbReference>
<dbReference type="PROSITE" id="PS50106">
    <property type="entry name" value="PDZ"/>
    <property type="match status" value="2"/>
</dbReference>
<comment type="function">
    <text evidence="4 6 7 10 11 12 18">Multifunctional adapter protein involved in diverse array of functions including trafficking of transmembrane proteins, neuro and immunomodulation, exosome biogenesis, and tumorigenesis (PubMed:26291527). Positively regulates TGFB1-mediated SMAD2/3 activation and TGFB1-induced epithelial-to-mesenchymal transition (EMT) and cell migration in various cell types. May increase TGFB1 signaling by enhancing cell-surface expression of TGFR1 by preventing the interaction between TGFR1 and CAV1 and subsequent CAV1-dependent internalization and degradation of TGFR1 (PubMed:25893292). In concert with SDC1/4 and PDCD6IP, regulates exosome biogenesis (PubMed:22660413). Regulates migration, growth, proliferation, and cell cycle progression in a variety of cancer types (PubMed:26539120). In adherens junctions may function to couple syndecans to cytoskeletal proteins or signaling components. Seems to couple transcription factor SOX4 to the IL-5 receptor (IL5RA) (PubMed:11498591). May also play a role in vesicular trafficking (PubMed:11179419). Seems to be required for the targeting of TGFA to the cell surface in the early secretory pathway (PubMed:10230395).</text>
</comment>
<comment type="subunit">
    <text evidence="1 2 5 10 11 13">Monomer and homodimer (By similarity). Interacts with SDC1, SDC2, SDC3, SDC4, NRXN2, EPHA7, EPHB1, NF2 isoform 1, TGFA and IL5RA. Interacts with NFASC and PTPRJ (By similarity). Interacts with SDCBP2 (PubMed:11152476). Interacts with PDCD6IP (PubMed:22660413). Forms a complex with PDCD6IP and SDC2 (PubMed:22660413). Interacts (via C-terminus) with TGFBR1 (PubMed:25893292). Binds to FZD7; this interaction is increased by inositol trisphosphate (IP3) (PubMed:27386966). Interacts with SMO (By similarity).</text>
</comment>
<comment type="interaction">
    <interactant intactId="EBI-727004">
        <id>O00560</id>
    </interactant>
    <interactant intactId="EBI-743598">
        <id>Q9NYB9</id>
        <label>ABI2</label>
    </interactant>
    <organismsDiffer>false</organismsDiffer>
    <experiments>5</experiments>
</comment>
<comment type="interaction">
    <interactant intactId="EBI-727004">
        <id>O00560</id>
    </interactant>
    <interactant intactId="EBI-8643161">
        <id>Q9NX04</id>
        <label>AIRIM</label>
    </interactant>
    <organismsDiffer>false</organismsDiffer>
    <experiments>3</experiments>
</comment>
<comment type="interaction">
    <interactant intactId="EBI-727004">
        <id>O00560</id>
    </interactant>
    <interactant intactId="EBI-16746154">
        <id>Q7Z3H0-1</id>
        <label>ANKRD33</label>
    </interactant>
    <organismsDiffer>false</organismsDiffer>
    <experiments>3</experiments>
</comment>
<comment type="interaction">
    <interactant intactId="EBI-727004">
        <id>O00560</id>
    </interactant>
    <interactant intactId="EBI-12170453">
        <id>Q8N2N9-4</id>
        <label>ANKRD36B</label>
    </interactant>
    <organismsDiffer>false</organismsDiffer>
    <experiments>3</experiments>
</comment>
<comment type="interaction">
    <interactant intactId="EBI-727004">
        <id>O00560</id>
    </interactant>
    <interactant intactId="EBI-2838246">
        <id>Q6AI12</id>
        <label>ANKRD40</label>
    </interactant>
    <organismsDiffer>false</organismsDiffer>
    <experiments>3</experiments>
</comment>
<comment type="interaction">
    <interactant intactId="EBI-727004">
        <id>O00560</id>
    </interactant>
    <interactant intactId="EBI-762428">
        <id>Q92688</id>
        <label>ANP32B</label>
    </interactant>
    <organismsDiffer>false</organismsDiffer>
    <experiments>6</experiments>
</comment>
<comment type="interaction">
    <interactant intactId="EBI-727004">
        <id>O00560</id>
    </interactant>
    <interactant intactId="EBI-359248">
        <id>Q96GX9</id>
        <label>APIP</label>
    </interactant>
    <organismsDiffer>false</organismsDiffer>
    <experiments>5</experiments>
</comment>
<comment type="interaction">
    <interactant intactId="EBI-727004">
        <id>O00560</id>
    </interactant>
    <interactant intactId="EBI-638194">
        <id>P53365</id>
        <label>ARFIP2</label>
    </interactant>
    <organismsDiffer>false</organismsDiffer>
    <experiments>3</experiments>
</comment>
<comment type="interaction">
    <interactant intactId="EBI-727004">
        <id>O00560</id>
    </interactant>
    <interactant intactId="EBI-714543">
        <id>Q15041</id>
        <label>ARL6IP1</label>
    </interactant>
    <organismsDiffer>false</organismsDiffer>
    <experiments>3</experiments>
</comment>
<comment type="interaction">
    <interactant intactId="EBI-727004">
        <id>O00560</id>
    </interactant>
    <interactant intactId="EBI-930964">
        <id>P54253</id>
        <label>ATXN1</label>
    </interactant>
    <organismsDiffer>false</organismsDiffer>
    <experiments>6</experiments>
</comment>
<comment type="interaction">
    <interactant intactId="EBI-727004">
        <id>O00560</id>
    </interactant>
    <interactant intactId="EBI-10247136">
        <id>Q5TBC7</id>
        <label>BCL2L15</label>
    </interactant>
    <organismsDiffer>false</organismsDiffer>
    <experiments>3</experiments>
</comment>
<comment type="interaction">
    <interactant intactId="EBI-727004">
        <id>O00560</id>
    </interactant>
    <interactant intactId="EBI-10181188">
        <id>Q8N7W2-2</id>
        <label>BEND7</label>
    </interactant>
    <organismsDiffer>false</organismsDiffer>
    <experiments>3</experiments>
</comment>
<comment type="interaction">
    <interactant intactId="EBI-727004">
        <id>O00560</id>
    </interactant>
    <interactant intactId="EBI-721765">
        <id>Q9H3H3</id>
        <label>C11orf68</label>
    </interactant>
    <organismsDiffer>false</organismsDiffer>
    <experiments>3</experiments>
</comment>
<comment type="interaction">
    <interactant intactId="EBI-727004">
        <id>O00560</id>
    </interactant>
    <interactant intactId="EBI-12002214">
        <id>Q9H3H3-3</id>
        <label>C11orf68</label>
    </interactant>
    <organismsDiffer>false</organismsDiffer>
    <experiments>3</experiments>
</comment>
<comment type="interaction">
    <interactant intactId="EBI-727004">
        <id>O00560</id>
    </interactant>
    <interactant intactId="EBI-12822627">
        <id>O14523</id>
        <label>C2CD2L</label>
    </interactant>
    <organismsDiffer>false</organismsDiffer>
    <experiments>3</experiments>
</comment>
<comment type="interaction">
    <interactant intactId="EBI-727004">
        <id>O00560</id>
    </interactant>
    <interactant intactId="EBI-10311131">
        <id>Q9NP86</id>
        <label>CABP5</label>
    </interactant>
    <organismsDiffer>false</organismsDiffer>
    <experiments>3</experiments>
</comment>
<comment type="interaction">
    <interactant intactId="EBI-727004">
        <id>O00560</id>
    </interactant>
    <interactant intactId="EBI-10179719">
        <id>A2RRN7</id>
        <label>CADPS</label>
    </interactant>
    <organismsDiffer>false</organismsDiffer>
    <experiments>3</experiments>
</comment>
<comment type="interaction">
    <interactant intactId="EBI-727004">
        <id>O00560</id>
    </interactant>
    <interactant intactId="EBI-10180690">
        <id>Q9ULU8-4</id>
        <label>CADPS</label>
    </interactant>
    <organismsDiffer>false</organismsDiffer>
    <experiments>3</experiments>
</comment>
<comment type="interaction">
    <interactant intactId="EBI-727004">
        <id>O00560</id>
    </interactant>
    <interactant intactId="EBI-739580">
        <id>Q13137</id>
        <label>CALCOCO2</label>
    </interactant>
    <organismsDiffer>false</organismsDiffer>
    <experiments>3</experiments>
</comment>
<comment type="interaction">
    <interactant intactId="EBI-727004">
        <id>O00560</id>
    </interactant>
    <interactant intactId="EBI-603607">
        <id>P51636</id>
        <label>CAV2</label>
    </interactant>
    <organismsDiffer>false</organismsDiffer>
    <experiments>3</experiments>
</comment>
<comment type="interaction">
    <interactant intactId="EBI-727004">
        <id>O00560</id>
    </interactant>
    <interactant intactId="EBI-714504">
        <id>O75828</id>
        <label>CBR3</label>
    </interactant>
    <organismsDiffer>false</organismsDiffer>
    <experiments>8</experiments>
</comment>
<comment type="interaction">
    <interactant intactId="EBI-727004">
        <id>O00560</id>
    </interactant>
    <interactant intactId="EBI-10171570">
        <id>Q68D86</id>
        <label>CCDC102B</label>
    </interactant>
    <organismsDiffer>false</organismsDiffer>
    <experiments>3</experiments>
</comment>
<comment type="interaction">
    <interactant intactId="EBI-727004">
        <id>O00560</id>
    </interactant>
    <interactant intactId="EBI-711501">
        <id>Q9BWC9</id>
        <label>CCDC106</label>
    </interactant>
    <organismsDiffer>false</organismsDiffer>
    <experiments>3</experiments>
</comment>
<comment type="interaction">
    <interactant intactId="EBI-727004">
        <id>O00560</id>
    </interactant>
    <interactant intactId="EBI-9250559">
        <id>P32320</id>
        <label>CDA</label>
    </interactant>
    <organismsDiffer>false</organismsDiffer>
    <experiments>6</experiments>
</comment>
<comment type="interaction">
    <interactant intactId="EBI-727004">
        <id>O00560</id>
    </interactant>
    <interactant intactId="EBI-975634">
        <id>P49427</id>
        <label>CDC34</label>
    </interactant>
    <organismsDiffer>false</organismsDiffer>
    <experiments>6</experiments>
</comment>
<comment type="interaction">
    <interactant intactId="EBI-727004">
        <id>O00560</id>
    </interactant>
    <interactant intactId="EBI-1019736">
        <id>Q9H5V8</id>
        <label>CDCP1</label>
    </interactant>
    <organismsDiffer>false</organismsDiffer>
    <experiments>6</experiments>
</comment>
<comment type="interaction">
    <interactant intactId="EBI-727004">
        <id>O00560</id>
    </interactant>
    <interactant intactId="EBI-358858">
        <id>O14735</id>
        <label>CDIPT</label>
    </interactant>
    <organismsDiffer>false</organismsDiffer>
    <experiments>3</experiments>
</comment>
<comment type="interaction">
    <interactant intactId="EBI-727004">
        <id>O00560</id>
    </interactant>
    <interactant intactId="EBI-745859">
        <id>P55273</id>
        <label>CDKN2D</label>
    </interactant>
    <organismsDiffer>false</organismsDiffer>
    <experiments>3</experiments>
</comment>
<comment type="interaction">
    <interactant intactId="EBI-727004">
        <id>O00560</id>
    </interactant>
    <interactant intactId="EBI-747776">
        <id>Q53EZ4</id>
        <label>CEP55</label>
    </interactant>
    <organismsDiffer>false</organismsDiffer>
    <experiments>6</experiments>
</comment>
<comment type="interaction">
    <interactant intactId="EBI-727004">
        <id>O00560</id>
    </interactant>
    <interactant intactId="EBI-12368239">
        <id>Q6P2H3-3</id>
        <label>CEP85</label>
    </interactant>
    <organismsDiffer>false</organismsDiffer>
    <experiments>3</experiments>
</comment>
<comment type="interaction">
    <interactant intactId="EBI-727004">
        <id>O00560</id>
    </interactant>
    <interactant intactId="EBI-723153">
        <id>Q9UFW8</id>
        <label>CGGBP1</label>
    </interactant>
    <organismsDiffer>false</organismsDiffer>
    <experiments>3</experiments>
</comment>
<comment type="interaction">
    <interactant intactId="EBI-727004">
        <id>O00560</id>
    </interactant>
    <interactant intactId="EBI-741528">
        <id>Q9UKJ5</id>
        <label>CHIC2</label>
    </interactant>
    <organismsDiffer>false</organismsDiffer>
    <experiments>3</experiments>
</comment>
<comment type="interaction">
    <interactant intactId="EBI-727004">
        <id>O00560</id>
    </interactant>
    <interactant intactId="EBI-1057156">
        <id>Q9HD42</id>
        <label>CHMP1A</label>
    </interactant>
    <organismsDiffer>false</organismsDiffer>
    <experiments>3</experiments>
</comment>
<comment type="interaction">
    <interactant intactId="EBI-727004">
        <id>O00560</id>
    </interactant>
    <interactant intactId="EBI-750020">
        <id>P49760</id>
        <label>CLK2</label>
    </interactant>
    <organismsDiffer>false</organismsDiffer>
    <experiments>3</experiments>
</comment>
<comment type="interaction">
    <interactant intactId="EBI-727004">
        <id>O00560</id>
    </interactant>
    <interactant intactId="EBI-745579">
        <id>P49761</id>
        <label>CLK3</label>
    </interactant>
    <organismsDiffer>false</organismsDiffer>
    <experiments>6</experiments>
</comment>
<comment type="interaction">
    <interactant intactId="EBI-727004">
        <id>O00560</id>
    </interactant>
    <interactant intactId="EBI-2548702">
        <id>Q96DZ9</id>
        <label>CMTM5</label>
    </interactant>
    <organismsDiffer>false</organismsDiffer>
    <experiments>3</experiments>
</comment>
<comment type="interaction">
    <interactant intactId="EBI-727004">
        <id>O00560</id>
    </interactant>
    <interactant intactId="EBI-11522780">
        <id>Q96DZ9-2</id>
        <label>CMTM5</label>
    </interactant>
    <organismsDiffer>false</organismsDiffer>
    <experiments>3</experiments>
</comment>
<comment type="interaction">
    <interactant intactId="EBI-727004">
        <id>O00560</id>
    </interactant>
    <interactant intactId="EBI-1056574">
        <id>P13073</id>
        <label>COX4I1</label>
    </interactant>
    <organismsDiffer>false</organismsDiffer>
    <experiments>4</experiments>
</comment>
<comment type="interaction">
    <interactant intactId="EBI-727004">
        <id>O00560</id>
    </interactant>
    <interactant intactId="EBI-10260134">
        <id>Q86WV2</id>
        <label>COX4I1</label>
    </interactant>
    <organismsDiffer>false</organismsDiffer>
    <experiments>3</experiments>
</comment>
<comment type="interaction">
    <interactant intactId="EBI-727004">
        <id>O00560</id>
    </interactant>
    <interactant intactId="EBI-748171">
        <id>O43186</id>
        <label>CRX</label>
    </interactant>
    <organismsDiffer>false</organismsDiffer>
    <experiments>3</experiments>
</comment>
<comment type="interaction">
    <interactant intactId="EBI-727004">
        <id>O00560</id>
    </interactant>
    <interactant intactId="EBI-6875961">
        <id>P02489</id>
        <label>CRYAA</label>
    </interactant>
    <organismsDiffer>false</organismsDiffer>
    <experiments>7</experiments>
</comment>
<comment type="interaction">
    <interactant intactId="EBI-727004">
        <id>O00560</id>
    </interactant>
    <interactant intactId="EBI-12051833">
        <id>Q5HYN5</id>
        <label>CT45A1</label>
    </interactant>
    <organismsDiffer>false</organismsDiffer>
    <experiments>3</experiments>
</comment>
<comment type="interaction">
    <interactant intactId="EBI-727004">
        <id>O00560</id>
    </interactant>
    <interactant intactId="EBI-12153495">
        <id>P0DMU9</id>
        <label>CT45A10</label>
    </interactant>
    <organismsDiffer>false</organismsDiffer>
    <experiments>6</experiments>
</comment>
<comment type="interaction">
    <interactant intactId="EBI-727004">
        <id>O00560</id>
    </interactant>
    <interactant intactId="EBI-8643558">
        <id>Q8NHU0</id>
        <label>CT45A3</label>
    </interactant>
    <organismsDiffer>false</organismsDiffer>
    <experiments>9</experiments>
</comment>
<comment type="interaction">
    <interactant intactId="EBI-727004">
        <id>O00560</id>
    </interactant>
    <interactant intactId="EBI-8635816">
        <id>Q6NSH3</id>
        <label>CT45A5</label>
    </interactant>
    <organismsDiffer>false</organismsDiffer>
    <experiments>3</experiments>
</comment>
<comment type="interaction">
    <interactant intactId="EBI-727004">
        <id>O00560</id>
    </interactant>
    <interactant intactId="EBI-10171902">
        <id>P56545-3</id>
        <label>CTBP2</label>
    </interactant>
    <organismsDiffer>false</organismsDiffer>
    <experiments>3</experiments>
</comment>
<comment type="interaction">
    <interactant intactId="EBI-727004">
        <id>O00560</id>
    </interactant>
    <interactant intactId="EBI-751587">
        <id>Q9GZU7</id>
        <label>CTDSP1</label>
    </interactant>
    <organismsDiffer>false</organismsDiffer>
    <experiments>3</experiments>
</comment>
<comment type="interaction">
    <interactant intactId="EBI-727004">
        <id>O00560</id>
    </interactant>
    <interactant intactId="EBI-714918">
        <id>Q9NTM9</id>
        <label>CUTC</label>
    </interactant>
    <organismsDiffer>false</organismsDiffer>
    <experiments>6</experiments>
</comment>
<comment type="interaction">
    <interactant intactId="EBI-727004">
        <id>O00560</id>
    </interactant>
    <interactant intactId="EBI-739870">
        <id>P32321</id>
        <label>DCTD</label>
    </interactant>
    <organismsDiffer>false</organismsDiffer>
    <experiments>6</experiments>
</comment>
<comment type="interaction">
    <interactant intactId="EBI-727004">
        <id>O00560</id>
    </interactant>
    <interactant intactId="EBI-723569">
        <id>Q9H773</id>
        <label>DCTPP1</label>
    </interactant>
    <organismsDiffer>false</organismsDiffer>
    <experiments>3</experiments>
</comment>
<comment type="interaction">
    <interactant intactId="EBI-727004">
        <id>O00560</id>
    </interactant>
    <interactant intactId="EBI-348622">
        <id>Q13838</id>
        <label>DDX39B</label>
    </interactant>
    <organismsDiffer>false</organismsDiffer>
    <experiments>3</experiments>
</comment>
<comment type="interaction">
    <interactant intactId="EBI-727004">
        <id>O00560</id>
    </interactant>
    <interactant intactId="EBI-12831318">
        <id>Q96Q80</id>
        <label>DERL3</label>
    </interactant>
    <organismsDiffer>false</organismsDiffer>
    <experiments>3</experiments>
</comment>
<comment type="interaction">
    <interactant intactId="EBI-727004">
        <id>O00560</id>
    </interactant>
    <interactant intactId="EBI-930865">
        <id>Q14565</id>
        <label>DMC1</label>
    </interactant>
    <organismsDiffer>false</organismsDiffer>
    <experiments>7</experiments>
</comment>
<comment type="interaction">
    <interactant intactId="EBI-727004">
        <id>O00560</id>
    </interactant>
    <interactant intactId="EBI-10976677">
        <id>G5E9A7</id>
        <label>DMWD</label>
    </interactant>
    <organismsDiffer>false</organismsDiffer>
    <experiments>3</experiments>
</comment>
<comment type="interaction">
    <interactant intactId="EBI-727004">
        <id>O00560</id>
    </interactant>
    <interactant intactId="EBI-346547">
        <id>P50570</id>
        <label>DNM2</label>
    </interactant>
    <organismsDiffer>false</organismsDiffer>
    <experiments>3</experiments>
</comment>
<comment type="interaction">
    <interactant intactId="EBI-727004">
        <id>O00560</id>
    </interactant>
    <interactant intactId="EBI-712941">
        <id>Q14919</id>
        <label>DRAP1</label>
    </interactant>
    <organismsDiffer>false</organismsDiffer>
    <experiments>5</experiments>
</comment>
<comment type="interaction">
    <interactant intactId="EBI-727004">
        <id>O00560</id>
    </interactant>
    <interactant intactId="EBI-465804">
        <id>Q96EV8</id>
        <label>DTNBP1</label>
    </interactant>
    <organismsDiffer>false</organismsDiffer>
    <experiments>3</experiments>
</comment>
<comment type="interaction">
    <interactant intactId="EBI-727004">
        <id>O00560</id>
    </interactant>
    <interactant intactId="EBI-1176455">
        <id>P63172</id>
        <label>DYNLT1</label>
    </interactant>
    <organismsDiffer>false</organismsDiffer>
    <experiments>3</experiments>
</comment>
<comment type="interaction">
    <interactant intactId="EBI-727004">
        <id>O00560</id>
    </interactant>
    <interactant intactId="EBI-769261">
        <id>Q96JC9</id>
        <label>EAF1</label>
    </interactant>
    <organismsDiffer>false</organismsDiffer>
    <experiments>3</experiments>
</comment>
<comment type="interaction">
    <interactant intactId="EBI-727004">
        <id>O00560</id>
    </interactant>
    <interactant intactId="EBI-2949647">
        <id>Q8WWZ3</id>
        <label>EDARADD</label>
    </interactant>
    <organismsDiffer>false</organismsDiffer>
    <experiments>3</experiments>
</comment>
<comment type="interaction">
    <interactant intactId="EBI-727004">
        <id>O00560</id>
    </interactant>
    <interactant intactId="EBI-750700">
        <id>Q8N9N8</id>
        <label>EIF1AD</label>
    </interactant>
    <organismsDiffer>false</organismsDiffer>
    <experiments>6</experiments>
</comment>
<comment type="interaction">
    <interactant intactId="EBI-727004">
        <id>O00560</id>
    </interactant>
    <interactant intactId="EBI-373150">
        <id>P63241</id>
        <label>EIF5A</label>
    </interactant>
    <organismsDiffer>false</organismsDiffer>
    <experiments>3</experiments>
</comment>
<comment type="interaction">
    <interactant intactId="EBI-727004">
        <id>O00560</id>
    </interactant>
    <interactant intactId="EBI-748028">
        <id>Q9GZV4</id>
        <label>EIF5A2</label>
    </interactant>
    <organismsDiffer>false</organismsDiffer>
    <experiments>6</experiments>
</comment>
<comment type="interaction">
    <interactant intactId="EBI-727004">
        <id>O00560</id>
    </interactant>
    <interactant intactId="EBI-374260">
        <id>Q15717</id>
        <label>ELAVL1</label>
    </interactant>
    <organismsDiffer>false</organismsDiffer>
    <experiments>3</experiments>
</comment>
<comment type="interaction">
    <interactant intactId="EBI-727004">
        <id>O00560</id>
    </interactant>
    <interactant intactId="EBI-3197883">
        <id>Q9NT22</id>
        <label>EMILIN3</label>
    </interactant>
    <organismsDiffer>false</organismsDiffer>
    <experiments>3</experiments>
</comment>
<comment type="interaction">
    <interactant intactId="EBI-727004">
        <id>O00560</id>
    </interactant>
    <interactant intactId="EBI-713221">
        <id>Q8TC92</id>
        <label>ENOX1</label>
    </interactant>
    <organismsDiffer>false</organismsDiffer>
    <experiments>3</experiments>
</comment>
<comment type="interaction">
    <interactant intactId="EBI-727004">
        <id>O00560</id>
    </interactant>
    <interactant intactId="EBI-10178036">
        <id>Q96C92-2</id>
        <label>ENTR1</label>
    </interactant>
    <organismsDiffer>false</organismsDiffer>
    <experiments>3</experiments>
</comment>
<comment type="interaction">
    <interactant intactId="EBI-727004">
        <id>O00560</id>
    </interactant>
    <interactant intactId="EBI-2682520">
        <id>A1L162</id>
        <label>ERICH2</label>
    </interactant>
    <organismsDiffer>false</organismsDiffer>
    <experiments>3</experiments>
</comment>
<comment type="interaction">
    <interactant intactId="EBI-727004">
        <id>O00560</id>
    </interactant>
    <interactant intactId="EBI-371823">
        <id>Q9NPD3</id>
        <label>EXOSC4</label>
    </interactant>
    <organismsDiffer>false</organismsDiffer>
    <experiments>3</experiments>
</comment>
<comment type="interaction">
    <interactant intactId="EBI-727004">
        <id>O00560</id>
    </interactant>
    <interactant intactId="EBI-494804">
        <id>Q13158</id>
        <label>FADD</label>
    </interactant>
    <organismsDiffer>false</organismsDiffer>
    <experiments>6</experiments>
</comment>
<comment type="interaction">
    <interactant intactId="EBI-727004">
        <id>O00560</id>
    </interactant>
    <interactant intactId="EBI-8638992">
        <id>Q9NWS6</id>
        <label>FAM118A</label>
    </interactant>
    <organismsDiffer>false</organismsDiffer>
    <experiments>3</experiments>
</comment>
<comment type="interaction">
    <interactant intactId="EBI-727004">
        <id>O00560</id>
    </interactant>
    <interactant intactId="EBI-726822">
        <id>Q9BPY3</id>
        <label>FAM118B</label>
    </interactant>
    <organismsDiffer>false</organismsDiffer>
    <experiments>3</experiments>
</comment>
<comment type="interaction">
    <interactant intactId="EBI-727004">
        <id>O00560</id>
    </interactant>
    <interactant intactId="EBI-8468186">
        <id>Q8IZU1</id>
        <label>FAM9A</label>
    </interactant>
    <organismsDiffer>false</organismsDiffer>
    <experiments>3</experiments>
</comment>
<comment type="interaction">
    <interactant intactId="EBI-727004">
        <id>O00560</id>
    </interactant>
    <interactant intactId="EBI-10175124">
        <id>Q8IZU0</id>
        <label>FAM9B</label>
    </interactant>
    <organismsDiffer>false</organismsDiffer>
    <experiments>6</experiments>
</comment>
<comment type="interaction">
    <interactant intactId="EBI-727004">
        <id>O00560</id>
    </interactant>
    <interactant intactId="EBI-741101">
        <id>Q13643</id>
        <label>FHL3</label>
    </interactant>
    <organismsDiffer>false</organismsDiffer>
    <experiments>3</experiments>
</comment>
<comment type="interaction">
    <interactant intactId="EBI-727004">
        <id>O00560</id>
    </interactant>
    <interactant intactId="EBI-750641">
        <id>Q5TD97</id>
        <label>FHL5</label>
    </interactant>
    <organismsDiffer>false</organismsDiffer>
    <experiments>3</experiments>
</comment>
<comment type="interaction">
    <interactant intactId="EBI-727004">
        <id>O00560</id>
    </interactant>
    <interactant intactId="EBI-742815">
        <id>Q8NFF5</id>
        <label>FLAD1</label>
    </interactant>
    <organismsDiffer>false</organismsDiffer>
    <experiments>4</experiments>
</comment>
<comment type="interaction">
    <interactant intactId="EBI-727004">
        <id>O00560</id>
    </interactant>
    <interactant intactId="EBI-983612">
        <id>O15409</id>
        <label>FOXP2</label>
    </interactant>
    <organismsDiffer>false</organismsDiffer>
    <experiments>3</experiments>
</comment>
<comment type="interaction">
    <interactant intactId="EBI-727004">
        <id>O00560</id>
    </interactant>
    <interactant intactId="EBI-10180219">
        <id>Q6NZ44</id>
        <label>FTH1</label>
    </interactant>
    <organismsDiffer>false</organismsDiffer>
    <experiments>3</experiments>
</comment>
<comment type="interaction">
    <interactant intactId="EBI-727004">
        <id>O00560</id>
    </interactant>
    <interactant intactId="EBI-713279">
        <id>P02792</id>
        <label>FTL</label>
    </interactant>
    <organismsDiffer>false</organismsDiffer>
    <experiments>7</experiments>
</comment>
<comment type="interaction">
    <interactant intactId="EBI-727004">
        <id>O00560</id>
    </interactant>
    <interactant intactId="EBI-746917">
        <id>O75084</id>
        <label>FZD7</label>
    </interactant>
    <organismsDiffer>false</organismsDiffer>
    <experiments>4</experiments>
</comment>
<comment type="interaction">
    <interactant intactId="EBI-727004">
        <id>O00560</id>
    </interactant>
    <interactant intactId="EBI-711823">
        <id>Q7L5D6</id>
        <label>GET4</label>
    </interactant>
    <organismsDiffer>false</organismsDiffer>
    <experiments>3</experiments>
</comment>
<comment type="interaction">
    <interactant intactId="EBI-727004">
        <id>O00560</id>
    </interactant>
    <interactant intactId="EBI-10179283">
        <id>O95749</id>
        <label>GGPS1</label>
    </interactant>
    <organismsDiffer>false</organismsDiffer>
    <experiments>3</experiments>
</comment>
<comment type="interaction">
    <interactant intactId="EBI-727004">
        <id>O00560</id>
    </interactant>
    <interactant intactId="EBI-743722">
        <id>Q5VSY0</id>
        <label>GKAP1</label>
    </interactant>
    <organismsDiffer>false</organismsDiffer>
    <experiments>3</experiments>
</comment>
<comment type="interaction">
    <interactant intactId="EBI-727004">
        <id>O00560</id>
    </interactant>
    <interactant intactId="EBI-4402607">
        <id>Q9Y3E0</id>
        <label>GOLT1B</label>
    </interactant>
    <organismsDiffer>false</organismsDiffer>
    <experiments>3</experiments>
</comment>
<comment type="interaction">
    <interactant intactId="EBI-727004">
        <id>O00560</id>
    </interactant>
    <interactant intactId="EBI-2555378">
        <id>Q8N954</id>
        <label>GPATCH11</label>
    </interactant>
    <organismsDiffer>false</organismsDiffer>
    <experiments>3</experiments>
</comment>
<comment type="interaction">
    <interactant intactId="EBI-727004">
        <id>O00560</id>
    </interactant>
    <interactant intactId="EBI-12178961">
        <id>Q8N954-2</id>
        <label>GPATCH11</label>
    </interactant>
    <organismsDiffer>false</organismsDiffer>
    <experiments>3</experiments>
</comment>
<comment type="interaction">
    <interactant intactId="EBI-727004">
        <id>O00560</id>
    </interactant>
    <interactant intactId="EBI-5235612">
        <id>A8MXD5</id>
        <label>GRXCR1</label>
    </interactant>
    <organismsDiffer>false</organismsDiffer>
    <experiments>3</experiments>
</comment>
<comment type="interaction">
    <interactant intactId="EBI-727004">
        <id>O00560</id>
    </interactant>
    <interactant intactId="EBI-19954058">
        <id>O15499</id>
        <label>GSC2</label>
    </interactant>
    <organismsDiffer>false</organismsDiffer>
    <experiments>3</experiments>
</comment>
<comment type="interaction">
    <interactant intactId="EBI-727004">
        <id>O00560</id>
    </interactant>
    <interactant intactId="EBI-12951679">
        <id>Q2KHT4-3</id>
        <label>GSG1</label>
    </interactant>
    <organismsDiffer>false</organismsDiffer>
    <experiments>3</experiments>
</comment>
<comment type="interaction">
    <interactant intactId="EBI-727004">
        <id>O00560</id>
    </interactant>
    <interactant intactId="EBI-10180762">
        <id>V9HW60</id>
        <label>HEL-S-182mP</label>
    </interactant>
    <organismsDiffer>false</organismsDiffer>
    <experiments>3</experiments>
</comment>
<comment type="interaction">
    <interactant intactId="EBI-727004">
        <id>O00560</id>
    </interactant>
    <interactant intactId="EBI-10330099">
        <id>V9HW40</id>
        <label>HEL-S-25</label>
    </interactant>
    <organismsDiffer>false</organismsDiffer>
    <experiments>3</experiments>
</comment>
<comment type="interaction">
    <interactant intactId="EBI-727004">
        <id>O00560</id>
    </interactant>
    <interactant intactId="EBI-5460660">
        <id>Q96MH2</id>
        <label>HEXIM2</label>
    </interactant>
    <organismsDiffer>false</organismsDiffer>
    <experiments>3</experiments>
</comment>
<comment type="interaction">
    <interactant intactId="EBI-727004">
        <id>O00560</id>
    </interactant>
    <interactant intactId="EBI-12951255">
        <id>Q5VTY9</id>
        <label>HHAT</label>
    </interactant>
    <organismsDiffer>false</organismsDiffer>
    <experiments>3</experiments>
</comment>
<comment type="interaction">
    <interactant intactId="EBI-727004">
        <id>O00560</id>
    </interactant>
    <interactant intactId="EBI-2549423">
        <id>Q6NT76</id>
        <label>HMBOX1</label>
    </interactant>
    <organismsDiffer>false</organismsDiffer>
    <experiments>3</experiments>
</comment>
<comment type="interaction">
    <interactant intactId="EBI-727004">
        <id>O00560</id>
    </interactant>
    <interactant intactId="EBI-2214136">
        <id>O15347</id>
        <label>HMGB3</label>
    </interactant>
    <organismsDiffer>false</organismsDiffer>
    <experiments>7</experiments>
</comment>
<comment type="interaction">
    <interactant intactId="EBI-727004">
        <id>O00560</id>
    </interactant>
    <interactant intactId="EBI-357966">
        <id>P07910</id>
        <label>HNRNPC</label>
    </interactant>
    <organismsDiffer>false</organismsDiffer>
    <experiments>6</experiments>
</comment>
<comment type="interaction">
    <interactant intactId="EBI-727004">
        <id>O00560</id>
    </interactant>
    <interactant intactId="EBI-748420">
        <id>Q9NSC5</id>
        <label>HOMER3</label>
    </interactant>
    <organismsDiffer>false</organismsDiffer>
    <experiments>5</experiments>
</comment>
<comment type="interaction">
    <interactant intactId="EBI-727004">
        <id>O00560</id>
    </interactant>
    <interactant intactId="EBI-10172004">
        <id>Q8IX15-3</id>
        <label>HOMEZ</label>
    </interactant>
    <organismsDiffer>false</organismsDiffer>
    <experiments>3</experiments>
</comment>
<comment type="interaction">
    <interactant intactId="EBI-727004">
        <id>O00560</id>
    </interactant>
    <interactant intactId="EBI-740785">
        <id>P49639</id>
        <label>HOXA1</label>
    </interactant>
    <organismsDiffer>false</organismsDiffer>
    <experiments>6</experiments>
</comment>
<comment type="interaction">
    <interactant intactId="EBI-727004">
        <id>O00560</id>
    </interactant>
    <interactant intactId="EBI-3910421">
        <id>P31268</id>
        <label>HOXA7</label>
    </interactant>
    <organismsDiffer>false</organismsDiffer>
    <experiments>3</experiments>
</comment>
<comment type="interaction">
    <interactant intactId="EBI-727004">
        <id>O00560</id>
    </interactant>
    <interactant intactId="EBI-748210">
        <id>P00492</id>
        <label>HPRT1</label>
    </interactant>
    <organismsDiffer>false</organismsDiffer>
    <experiments>7</experiments>
</comment>
<comment type="interaction">
    <interactant intactId="EBI-727004">
        <id>O00560</id>
    </interactant>
    <interactant intactId="EBI-748664">
        <id>O75506</id>
        <label>HSBP1</label>
    </interactant>
    <organismsDiffer>false</organismsDiffer>
    <experiments>8</experiments>
</comment>
<comment type="interaction">
    <interactant intactId="EBI-727004">
        <id>O00560</id>
    </interactant>
    <interactant intactId="EBI-7116203">
        <id>O75031</id>
        <label>HSF2BP</label>
    </interactant>
    <organismsDiffer>false</organismsDiffer>
    <experiments>3</experiments>
</comment>
<comment type="interaction">
    <interactant intactId="EBI-727004">
        <id>O00560</id>
    </interactant>
    <interactant intactId="EBI-466029">
        <id>P42858</id>
        <label>HTT</label>
    </interactant>
    <organismsDiffer>false</organismsDiffer>
    <experiments>12</experiments>
</comment>
<comment type="interaction">
    <interactant intactId="EBI-727004">
        <id>O00560</id>
    </interactant>
    <interactant intactId="EBI-1056174">
        <id>O60921</id>
        <label>HUS1</label>
    </interactant>
    <organismsDiffer>false</organismsDiffer>
    <experiments>3</experiments>
</comment>
<comment type="interaction">
    <interactant intactId="EBI-727004">
        <id>O00560</id>
    </interactant>
    <interactant intactId="EBI-1387094">
        <id>Q02535</id>
        <label>ID3</label>
    </interactant>
    <organismsDiffer>false</organismsDiffer>
    <experiments>3</experiments>
</comment>
<comment type="interaction">
    <interactant intactId="EBI-727004">
        <id>O00560</id>
    </interactant>
    <interactant intactId="EBI-947015">
        <id>P24592</id>
        <label>IGFBP6</label>
    </interactant>
    <organismsDiffer>false</organismsDiffer>
    <experiments>3</experiments>
</comment>
<comment type="interaction">
    <interactant intactId="EBI-727004">
        <id>O00560</id>
    </interactant>
    <interactant intactId="EBI-8638439">
        <id>Q8IYA8</id>
        <label>IHO1</label>
    </interactant>
    <organismsDiffer>false</organismsDiffer>
    <experiments>3</experiments>
</comment>
<comment type="interaction">
    <interactant intactId="EBI-727004">
        <id>O00560</id>
    </interactant>
    <interactant intactId="EBI-745305">
        <id>Q13422</id>
        <label>IKZF1</label>
    </interactant>
    <organismsDiffer>false</organismsDiffer>
    <experiments>3</experiments>
</comment>
<comment type="interaction">
    <interactant intactId="EBI-727004">
        <id>O00560</id>
    </interactant>
    <interactant intactId="EBI-1759442">
        <id>Q01344</id>
        <label>IL5RA</label>
    </interactant>
    <organismsDiffer>false</organismsDiffer>
    <experiments>2</experiments>
</comment>
<comment type="interaction">
    <interactant intactId="EBI-727004">
        <id>O00560</id>
    </interactant>
    <interactant intactId="EBI-769401">
        <id>Q8NBZ0</id>
        <label>INO80E</label>
    </interactant>
    <organismsDiffer>false</organismsDiffer>
    <experiments>6</experiments>
</comment>
<comment type="interaction">
    <interactant intactId="EBI-727004">
        <id>O00560</id>
    </interactant>
    <interactant intactId="EBI-715394">
        <id>Q9H079</id>
        <label>KATNBL1</label>
    </interactant>
    <organismsDiffer>false</organismsDiffer>
    <experiments>3</experiments>
</comment>
<comment type="interaction">
    <interactant intactId="EBI-727004">
        <id>O00560</id>
    </interactant>
    <interactant intactId="EBI-2909270">
        <id>O95259</id>
        <label>KCNH1</label>
    </interactant>
    <organismsDiffer>false</organismsDiffer>
    <experiments>3</experiments>
</comment>
<comment type="interaction">
    <interactant intactId="EBI-727004">
        <id>O00560</id>
    </interactant>
    <interactant intactId="EBI-703457">
        <id>P63252</id>
        <label>KCNJ2</label>
    </interactant>
    <organismsDiffer>false</organismsDiffer>
    <experiments>3</experiments>
</comment>
<comment type="interaction">
    <interactant intactId="EBI-727004">
        <id>O00560</id>
    </interactant>
    <interactant intactId="EBI-9027502">
        <id>Q719H9</id>
        <label>KCTD1</label>
    </interactant>
    <organismsDiffer>false</organismsDiffer>
    <experiments>6</experiments>
</comment>
<comment type="interaction">
    <interactant intactId="EBI-727004">
        <id>O00560</id>
    </interactant>
    <interactant intactId="EBI-2511344">
        <id>Q8NC69</id>
        <label>KCTD6</label>
    </interactant>
    <organismsDiffer>false</organismsDiffer>
    <experiments>6</experiments>
</comment>
<comment type="interaction">
    <interactant intactId="EBI-727004">
        <id>O00560</id>
    </interactant>
    <interactant intactId="EBI-4397613">
        <id>Q7L273</id>
        <label>KCTD9</label>
    </interactant>
    <organismsDiffer>false</organismsDiffer>
    <experiments>6</experiments>
</comment>
<comment type="interaction">
    <interactant intactId="EBI-727004">
        <id>O00560</id>
    </interactant>
    <interactant intactId="EBI-742808">
        <id>Q5VWX1</id>
        <label>KHDRBS2</label>
    </interactant>
    <organismsDiffer>false</organismsDiffer>
    <experiments>6</experiments>
</comment>
<comment type="interaction">
    <interactant intactId="EBI-727004">
        <id>O00560</id>
    </interactant>
    <interactant intactId="EBI-10975473">
        <id>O60333-2</id>
        <label>KIF1B</label>
    </interactant>
    <organismsDiffer>false</organismsDiffer>
    <experiments>3</experiments>
</comment>
<comment type="interaction">
    <interactant intactId="EBI-727004">
        <id>O00560</id>
    </interactant>
    <interactant intactId="EBI-740929">
        <id>Q53G59</id>
        <label>KLHL12</label>
    </interactant>
    <organismsDiffer>false</organismsDiffer>
    <experiments>8</experiments>
</comment>
<comment type="interaction">
    <interactant intactId="EBI-727004">
        <id>O00560</id>
    </interactant>
    <interactant intactId="EBI-746999">
        <id>O95198</id>
        <label>KLHL2</label>
    </interactant>
    <organismsDiffer>false</organismsDiffer>
    <experiments>3</experiments>
</comment>
<comment type="interaction">
    <interactant intactId="EBI-727004">
        <id>O00560</id>
    </interactant>
    <interactant intactId="EBI-702178">
        <id>P02533</id>
        <label>KRT14</label>
    </interactant>
    <organismsDiffer>false</organismsDiffer>
    <experiments>3</experiments>
</comment>
<comment type="interaction">
    <interactant intactId="EBI-727004">
        <id>O00560</id>
    </interactant>
    <interactant intactId="EBI-11749135">
        <id>Q8IUG1</id>
        <label>KRTAP1-3</label>
    </interactant>
    <organismsDiffer>false</organismsDiffer>
    <experiments>3</experiments>
</comment>
<comment type="interaction">
    <interactant intactId="EBI-727004">
        <id>O00560</id>
    </interactant>
    <interactant intactId="EBI-11741292">
        <id>Q9BYS1</id>
        <label>KRTAP1-5</label>
    </interactant>
    <organismsDiffer>false</organismsDiffer>
    <experiments>3</experiments>
</comment>
<comment type="interaction">
    <interactant intactId="EBI-727004">
        <id>O00560</id>
    </interactant>
    <interactant intactId="EBI-10172290">
        <id>P60409</id>
        <label>KRTAP10-7</label>
    </interactant>
    <organismsDiffer>false</organismsDiffer>
    <experiments>3</experiments>
</comment>
<comment type="interaction">
    <interactant intactId="EBI-727004">
        <id>O00560</id>
    </interactant>
    <interactant intactId="EBI-3958099">
        <id>P26371</id>
        <label>KRTAP5-9</label>
    </interactant>
    <organismsDiffer>false</organismsDiffer>
    <experiments>6</experiments>
</comment>
<comment type="interaction">
    <interactant intactId="EBI-727004">
        <id>O00560</id>
    </interactant>
    <interactant intactId="EBI-2865580">
        <id>O43679</id>
        <label>LDB2</label>
    </interactant>
    <organismsDiffer>false</organismsDiffer>
    <experiments>3</experiments>
</comment>
<comment type="interaction">
    <interactant intactId="EBI-727004">
        <id>O00560</id>
    </interactant>
    <interactant intactId="EBI-358748">
        <id>P07195</id>
        <label>LDHB</label>
    </interactant>
    <organismsDiffer>false</organismsDiffer>
    <experiments>3</experiments>
</comment>
<comment type="interaction">
    <interactant intactId="EBI-727004">
        <id>O00560</id>
    </interactant>
    <interactant intactId="EBI-740738">
        <id>O95751</id>
        <label>LDOC1</label>
    </interactant>
    <organismsDiffer>false</organismsDiffer>
    <experiments>6</experiments>
</comment>
<comment type="interaction">
    <interactant intactId="EBI-727004">
        <id>O00560</id>
    </interactant>
    <interactant intactId="EBI-750776">
        <id>O95214</id>
        <label>LEPROTL1</label>
    </interactant>
    <organismsDiffer>false</organismsDiffer>
    <experiments>3</experiments>
</comment>
<comment type="interaction">
    <interactant intactId="EBI-727004">
        <id>O00560</id>
    </interactant>
    <interactant intactId="EBI-7181544">
        <id>P05162</id>
        <label>LGALS2</label>
    </interactant>
    <organismsDiffer>false</organismsDiffer>
    <experiments>9</experiments>
</comment>
<comment type="interaction">
    <interactant intactId="EBI-727004">
        <id>O00560</id>
    </interactant>
    <interactant intactId="EBI-373310">
        <id>P62312</id>
        <label>LSM6</label>
    </interactant>
    <organismsDiffer>false</organismsDiffer>
    <experiments>6</experiments>
</comment>
<comment type="interaction">
    <interactant intactId="EBI-727004">
        <id>O00560</id>
    </interactant>
    <interactant intactId="EBI-12898559">
        <id>Q8IV03</id>
        <label>LURAP1L</label>
    </interactant>
    <organismsDiffer>false</organismsDiffer>
    <experiments>3</experiments>
</comment>
<comment type="interaction">
    <interactant intactId="EBI-727004">
        <id>O00560</id>
    </interactant>
    <interactant intactId="EBI-2824799">
        <id>Q9NQ48</id>
        <label>LZTFL1</label>
    </interactant>
    <organismsDiffer>false</organismsDiffer>
    <experiments>6</experiments>
</comment>
<comment type="interaction">
    <interactant intactId="EBI-727004">
        <id>O00560</id>
    </interactant>
    <interactant intactId="EBI-78203">
        <id>Q13257</id>
        <label>MAD2L1</label>
    </interactant>
    <organismsDiffer>false</organismsDiffer>
    <experiments>3</experiments>
</comment>
<comment type="interaction">
    <interactant intactId="EBI-727004">
        <id>O00560</id>
    </interactant>
    <interactant intactId="EBI-713568">
        <id>P45984</id>
        <label>MAPK9</label>
    </interactant>
    <organismsDiffer>false</organismsDiffer>
    <experiments>3</experiments>
</comment>
<comment type="interaction">
    <interactant intactId="EBI-727004">
        <id>O00560</id>
    </interactant>
    <interactant intactId="EBI-726739">
        <id>Q9UPY8</id>
        <label>MAPRE3</label>
    </interactant>
    <organismsDiffer>false</organismsDiffer>
    <experiments>6</experiments>
</comment>
<comment type="interaction">
    <interactant intactId="EBI-727004">
        <id>O00560</id>
    </interactant>
    <interactant intactId="EBI-12072296">
        <id>O95460-2</id>
        <label>MATN4</label>
    </interactant>
    <organismsDiffer>false</organismsDiffer>
    <experiments>3</experiments>
</comment>
<comment type="interaction">
    <interactant intactId="EBI-727004">
        <id>O00560</id>
    </interactant>
    <interactant intactId="EBI-1783068">
        <id>O95983</id>
        <label>MBD3</label>
    </interactant>
    <organismsDiffer>false</organismsDiffer>
    <experiments>3</experiments>
</comment>
<comment type="interaction">
    <interactant intactId="EBI-727004">
        <id>O00560</id>
    </interactant>
    <interactant intactId="EBI-394607">
        <id>Q9NPJ6</id>
        <label>MED4</label>
    </interactant>
    <organismsDiffer>false</organismsDiffer>
    <experiments>3</experiments>
</comment>
<comment type="interaction">
    <interactant intactId="EBI-727004">
        <id>O00560</id>
    </interactant>
    <interactant intactId="EBI-2864512">
        <id>P50221</id>
        <label>MEOX1</label>
    </interactant>
    <organismsDiffer>false</organismsDiffer>
    <experiments>3</experiments>
</comment>
<comment type="interaction">
    <interactant intactId="EBI-727004">
        <id>O00560</id>
    </interactant>
    <interactant intactId="EBI-16439278">
        <id>Q6FHY5</id>
        <label>MEOX2</label>
    </interactant>
    <organismsDiffer>false</organismsDiffer>
    <experiments>3</experiments>
</comment>
<comment type="interaction">
    <interactant intactId="EBI-727004">
        <id>O00560</id>
    </interactant>
    <interactant intactId="EBI-12866138">
        <id>A0A0C4DFN3</id>
        <label>MGLL</label>
    </interactant>
    <organismsDiffer>false</organismsDiffer>
    <experiments>3</experiments>
</comment>
<comment type="interaction">
    <interactant intactId="EBI-727004">
        <id>O00560</id>
    </interactant>
    <interactant intactId="EBI-10172526">
        <id>Q9UJV3-2</id>
        <label>MID2</label>
    </interactant>
    <organismsDiffer>false</organismsDiffer>
    <experiments>3</experiments>
</comment>
<comment type="interaction">
    <interactant intactId="EBI-727004">
        <id>O00560</id>
    </interactant>
    <interactant intactId="EBI-724928">
        <id>Q9H8M7</id>
        <label>MINDY3</label>
    </interactant>
    <organismsDiffer>false</organismsDiffer>
    <experiments>3</experiments>
</comment>
<comment type="interaction">
    <interactant intactId="EBI-727004">
        <id>O00560</id>
    </interactant>
    <interactant intactId="EBI-373524">
        <id>Q9UHC7</id>
        <label>MKRN1</label>
    </interactant>
    <organismsDiffer>false</organismsDiffer>
    <experiments>3</experiments>
</comment>
<comment type="interaction">
    <interactant intactId="EBI-727004">
        <id>O00560</id>
    </interactant>
    <interactant intactId="EBI-742459">
        <id>Q9BU76</id>
        <label>MMTAG2</label>
    </interactant>
    <organismsDiffer>false</organismsDiffer>
    <experiments>3</experiments>
</comment>
<comment type="interaction">
    <interactant intactId="EBI-727004">
        <id>O00560</id>
    </interactant>
    <interactant intactId="EBI-12013470">
        <id>Q13875-3</id>
        <label>MOBP</label>
    </interactant>
    <organismsDiffer>false</organismsDiffer>
    <experiments>3</experiments>
</comment>
<comment type="interaction">
    <interactant intactId="EBI-727004">
        <id>O00560</id>
    </interactant>
    <interactant intactId="EBI-995714">
        <id>Q9Y605</id>
        <label>MRFAP1</label>
    </interactant>
    <organismsDiffer>false</organismsDiffer>
    <experiments>3</experiments>
</comment>
<comment type="interaction">
    <interactant intactId="EBI-727004">
        <id>O00560</id>
    </interactant>
    <interactant intactId="EBI-748896">
        <id>Q96HT8</id>
        <label>MRFAP1L1</label>
    </interactant>
    <organismsDiffer>false</organismsDiffer>
    <experiments>8</experiments>
</comment>
<comment type="interaction">
    <interactant intactId="EBI-727004">
        <id>O00560</id>
    </interactant>
    <interactant intactId="EBI-742948">
        <id>Q5JR59</id>
        <label>MTUS2</label>
    </interactant>
    <organismsDiffer>false</organismsDiffer>
    <experiments>3</experiments>
</comment>
<comment type="interaction">
    <interactant intactId="EBI-727004">
        <id>O00560</id>
    </interactant>
    <interactant intactId="EBI-11522433">
        <id>Q5JR59-3</id>
        <label>MTUS2</label>
    </interactant>
    <organismsDiffer>false</organismsDiffer>
    <experiments>3</experiments>
</comment>
<comment type="interaction">
    <interactant intactId="EBI-727004">
        <id>O00560</id>
    </interactant>
    <interactant intactId="EBI-6952711">
        <id>Q8WY64</id>
        <label>MYLIP</label>
    </interactant>
    <organismsDiffer>false</organismsDiffer>
    <experiments>3</experiments>
</comment>
<comment type="interaction">
    <interactant intactId="EBI-727004">
        <id>O00560</id>
    </interactant>
    <interactant intactId="EBI-2512055">
        <id>O15049</id>
        <label>N4BP3</label>
    </interactant>
    <organismsDiffer>false</organismsDiffer>
    <experiments>3</experiments>
</comment>
<comment type="interaction">
    <interactant intactId="EBI-727004">
        <id>O00560</id>
    </interactant>
    <interactant intactId="EBI-743949">
        <id>O95544</id>
        <label>NADK</label>
    </interactant>
    <organismsDiffer>false</organismsDiffer>
    <experiments>7</experiments>
</comment>
<comment type="interaction">
    <interactant intactId="EBI-727004">
        <id>O00560</id>
    </interactant>
    <interactant intactId="EBI-372578">
        <id>Q9UJ70</id>
        <label>NAGK</label>
    </interactant>
    <organismsDiffer>false</organismsDiffer>
    <experiments>5</experiments>
</comment>
<comment type="interaction">
    <interactant intactId="EBI-727004">
        <id>O00560</id>
    </interactant>
    <interactant intactId="EBI-11526455">
        <id>Q9UJ70-2</id>
        <label>NAGK</label>
    </interactant>
    <organismsDiffer>false</organismsDiffer>
    <experiments>3</experiments>
</comment>
<comment type="interaction">
    <interactant intactId="EBI-727004">
        <id>O00560</id>
    </interactant>
    <interactant intactId="EBI-3921185">
        <id>Q9H115</id>
        <label>NAPB</label>
    </interactant>
    <organismsDiffer>false</organismsDiffer>
    <experiments>3</experiments>
</comment>
<comment type="interaction">
    <interactant intactId="EBI-727004">
        <id>O00560</id>
    </interactant>
    <interactant intactId="EBI-10172876">
        <id>Q7Z6G3-2</id>
        <label>NECAB2</label>
    </interactant>
    <organismsDiffer>false</organismsDiffer>
    <experiments>5</experiments>
</comment>
<comment type="interaction">
    <interactant intactId="EBI-727004">
        <id>O00560</id>
    </interactant>
    <interactant intactId="EBI-1771314">
        <id>Q15223</id>
        <label>NECTIN1</label>
    </interactant>
    <organismsDiffer>false</organismsDiffer>
    <experiments>8</experiments>
</comment>
<comment type="interaction">
    <interactant intactId="EBI-727004">
        <id>O00560</id>
    </interactant>
    <interactant intactId="EBI-3920396">
        <id>Q6ZUT1</id>
        <label>NKAPD1</label>
    </interactant>
    <organismsDiffer>false</organismsDiffer>
    <experiments>8</experiments>
</comment>
<comment type="interaction">
    <interactant intactId="EBI-727004">
        <id>O00560</id>
    </interactant>
    <interactant intactId="EBI-10180231">
        <id>Q6ZUT1-2</id>
        <label>NKAPD1</label>
    </interactant>
    <organismsDiffer>false</organismsDiffer>
    <experiments>3</experiments>
</comment>
<comment type="interaction">
    <interactant intactId="EBI-727004">
        <id>O00560</id>
    </interactant>
    <interactant intactId="EBI-945833">
        <id>Q7Z3S9</id>
        <label>NOTCH2NLA</label>
    </interactant>
    <organismsDiffer>false</organismsDiffer>
    <experiments>3</experiments>
</comment>
<comment type="interaction">
    <interactant intactId="EBI-727004">
        <id>O00560</id>
    </interactant>
    <interactant intactId="EBI-742084">
        <id>P49902</id>
        <label>NT5C2</label>
    </interactant>
    <organismsDiffer>false</organismsDiffer>
    <experiments>3</experiments>
</comment>
<comment type="interaction">
    <interactant intactId="EBI-727004">
        <id>O00560</id>
    </interactant>
    <interactant intactId="EBI-11955379">
        <id>P0CE72</id>
        <label>OCM</label>
    </interactant>
    <organismsDiffer>false</organismsDiffer>
    <experiments>3</experiments>
</comment>
<comment type="interaction">
    <interactant intactId="EBI-727004">
        <id>O00560</id>
    </interactant>
    <interactant intactId="EBI-5774125">
        <id>A1E959</id>
        <label>ODAM</label>
    </interactant>
    <organismsDiffer>false</organismsDiffer>
    <experiments>3</experiments>
</comment>
<comment type="interaction">
    <interactant intactId="EBI-727004">
        <id>O00560</id>
    </interactant>
    <interactant intactId="EBI-748974">
        <id>Q96CV9</id>
        <label>OPTN</label>
    </interactant>
    <organismsDiffer>false</organismsDiffer>
    <experiments>3</experiments>
</comment>
<comment type="interaction">
    <interactant intactId="EBI-727004">
        <id>O00560</id>
    </interactant>
    <interactant intactId="EBI-1051152">
        <id>Q92882</id>
        <label>OSTF1</label>
    </interactant>
    <organismsDiffer>false</organismsDiffer>
    <experiments>3</experiments>
</comment>
<comment type="interaction">
    <interactant intactId="EBI-727004">
        <id>O00560</id>
    </interactant>
    <interactant intactId="EBI-740475">
        <id>P61457</id>
        <label>PCBD1</label>
    </interactant>
    <organismsDiffer>false</organismsDiffer>
    <experiments>3</experiments>
</comment>
<comment type="interaction">
    <interactant intactId="EBI-727004">
        <id>O00560</id>
    </interactant>
    <interactant intactId="EBI-2563309">
        <id>P49585</id>
        <label>PCYT1A</label>
    </interactant>
    <organismsDiffer>false</organismsDiffer>
    <experiments>3</experiments>
</comment>
<comment type="interaction">
    <interactant intactId="EBI-727004">
        <id>O00560</id>
    </interactant>
    <interactant intactId="EBI-1105124">
        <id>Q5VU43</id>
        <label>PDE4DIP</label>
    </interactant>
    <organismsDiffer>false</organismsDiffer>
    <experiments>4</experiments>
</comment>
<comment type="interaction">
    <interactant intactId="EBI-727004">
        <id>O00560</id>
    </interactant>
    <interactant intactId="EBI-9640281">
        <id>Q5VU43-2</id>
        <label>PDE4DIP</label>
    </interactant>
    <organismsDiffer>false</organismsDiffer>
    <experiments>4</experiments>
</comment>
<comment type="interaction">
    <interactant intactId="EBI-727004">
        <id>O00560</id>
    </interactant>
    <interactant intactId="EBI-11524542">
        <id>O76083-2</id>
        <label>PDE9A</label>
    </interactant>
    <organismsDiffer>false</organismsDiffer>
    <experiments>3</experiments>
</comment>
<comment type="interaction">
    <interactant intactId="EBI-727004">
        <id>O00560</id>
    </interactant>
    <interactant intactId="EBI-372861">
        <id>P50479</id>
        <label>PDLIM4</label>
    </interactant>
    <organismsDiffer>false</organismsDiffer>
    <experiments>3</experiments>
</comment>
<comment type="interaction">
    <interactant intactId="EBI-727004">
        <id>O00560</id>
    </interactant>
    <interactant intactId="EBI-716063">
        <id>Q13113</id>
        <label>PDZK1IP1</label>
    </interactant>
    <organismsDiffer>false</organismsDiffer>
    <experiments>3</experiments>
</comment>
<comment type="interaction">
    <interactant intactId="EBI-727004">
        <id>O00560</id>
    </interactant>
    <interactant intactId="EBI-357275">
        <id>Q99471</id>
        <label>PFDN5</label>
    </interactant>
    <organismsDiffer>false</organismsDiffer>
    <experiments>3</experiments>
</comment>
<comment type="interaction">
    <interactant intactId="EBI-727004">
        <id>O00560</id>
    </interactant>
    <interactant intactId="EBI-713786">
        <id>Q8IXK0</id>
        <label>PHC2</label>
    </interactant>
    <organismsDiffer>false</organismsDiffer>
    <experiments>3</experiments>
</comment>
<comment type="interaction">
    <interactant intactId="EBI-727004">
        <id>O00560</id>
    </interactant>
    <interactant intactId="EBI-2861403">
        <id>Q9UIL8</id>
        <label>PHF11</label>
    </interactant>
    <organismsDiffer>false</organismsDiffer>
    <experiments>3</experiments>
</comment>
<comment type="interaction">
    <interactant intactId="EBI-727004">
        <id>O00560</id>
    </interactant>
    <interactant intactId="EBI-10232538">
        <id>Q8WWB5</id>
        <label>PIH1D2</label>
    </interactant>
    <organismsDiffer>false</organismsDiffer>
    <experiments>3</experiments>
</comment>
<comment type="interaction">
    <interactant intactId="EBI-727004">
        <id>O00560</id>
    </interactant>
    <interactant intactId="EBI-302345">
        <id>Q8ND90</id>
        <label>PNMA1</label>
    </interactant>
    <organismsDiffer>false</organismsDiffer>
    <experiments>8</experiments>
</comment>
<comment type="interaction">
    <interactant intactId="EBI-727004">
        <id>O00560</id>
    </interactant>
    <interactant intactId="EBI-302355">
        <id>Q9UL42</id>
        <label>PNMA2</label>
    </interactant>
    <organismsDiffer>false</organismsDiffer>
    <experiments>7</experiments>
</comment>
<comment type="interaction">
    <interactant intactId="EBI-727004">
        <id>O00560</id>
    </interactant>
    <interactant intactId="EBI-394753">
        <id>P52435</id>
        <label>POLR2J</label>
    </interactant>
    <organismsDiffer>false</organismsDiffer>
    <experiments>3</experiments>
</comment>
<comment type="interaction">
    <interactant intactId="EBI-727004">
        <id>O00560</id>
    </interactant>
    <interactant intactId="EBI-11023785">
        <id>Q9Y2Y1</id>
        <label>POLR3K</label>
    </interactant>
    <organismsDiffer>false</organismsDiffer>
    <experiments>3</experiments>
</comment>
<comment type="interaction">
    <interactant intactId="EBI-727004">
        <id>O00560</id>
    </interactant>
    <interactant intactId="EBI-715374">
        <id>Q8NAV1</id>
        <label>PRPF38A</label>
    </interactant>
    <organismsDiffer>false</organismsDiffer>
    <experiments>3</experiments>
</comment>
<comment type="interaction">
    <interactant intactId="EBI-727004">
        <id>O00560</id>
    </interactant>
    <interactant intactId="EBI-5280197">
        <id>O75400-2</id>
        <label>PRPF40A</label>
    </interactant>
    <organismsDiffer>false</organismsDiffer>
    <experiments>3</experiments>
</comment>
<comment type="interaction">
    <interactant intactId="EBI-727004">
        <id>O00560</id>
    </interactant>
    <interactant intactId="EBI-740924">
        <id>Q9NZ81</id>
        <label>PRR13</label>
    </interactant>
    <organismsDiffer>false</organismsDiffer>
    <experiments>3</experiments>
</comment>
<comment type="interaction">
    <interactant intactId="EBI-727004">
        <id>O00560</id>
    </interactant>
    <interactant intactId="EBI-603340">
        <id>P49720</id>
        <label>PSMB3</label>
    </interactant>
    <organismsDiffer>false</organismsDiffer>
    <experiments>3</experiments>
</comment>
<comment type="interaction">
    <interactant intactId="EBI-727004">
        <id>O00560</id>
    </interactant>
    <interactant intactId="EBI-357669">
        <id>P62333</id>
        <label>PSMC6</label>
    </interactant>
    <organismsDiffer>false</organismsDiffer>
    <experiments>6</experiments>
</comment>
<comment type="interaction">
    <interactant intactId="EBI-727004">
        <id>O00560</id>
    </interactant>
    <interactant intactId="EBI-741630">
        <id>Q9UL46</id>
        <label>PSME2</label>
    </interactant>
    <organismsDiffer>false</organismsDiffer>
    <experiments>5</experiments>
</comment>
<comment type="interaction">
    <interactant intactId="EBI-727004">
        <id>O00560</id>
    </interactant>
    <interactant intactId="EBI-1050964">
        <id>O43586</id>
        <label>PSTPIP1</label>
    </interactant>
    <organismsDiffer>false</organismsDiffer>
    <experiments>3</experiments>
</comment>
<comment type="interaction">
    <interactant intactId="EBI-727004">
        <id>O00560</id>
    </interactant>
    <interactant intactId="EBI-712344">
        <id>Q03393</id>
        <label>PTS</label>
    </interactant>
    <organismsDiffer>false</organismsDiffer>
    <experiments>4</experiments>
</comment>
<comment type="interaction">
    <interactant intactId="EBI-727004">
        <id>O00560</id>
    </interactant>
    <interactant intactId="EBI-1053259">
        <id>Q9UHX1</id>
        <label>PUF60</label>
    </interactant>
    <organismsDiffer>false</organismsDiffer>
    <experiments>3</experiments>
</comment>
<comment type="interaction">
    <interactant intactId="EBI-727004">
        <id>O00560</id>
    </interactant>
    <interactant intactId="EBI-2959680">
        <id>Q53H96</id>
        <label>PYCR3</label>
    </interactant>
    <organismsDiffer>false</organismsDiffer>
    <experiments>8</experiments>
</comment>
<comment type="interaction">
    <interactant intactId="EBI-727004">
        <id>O00560</id>
    </interactant>
    <interactant intactId="EBI-9512693">
        <id>Q53GL6</id>
        <label>RALY</label>
    </interactant>
    <organismsDiffer>false</organismsDiffer>
    <experiments>3</experiments>
</comment>
<comment type="interaction">
    <interactant intactId="EBI-727004">
        <id>O00560</id>
    </interactant>
    <interactant intactId="EBI-395290">
        <id>Q14498</id>
        <label>RBM39</label>
    </interactant>
    <organismsDiffer>false</organismsDiffer>
    <experiments>3</experiments>
</comment>
<comment type="interaction">
    <interactant intactId="EBI-727004">
        <id>O00560</id>
    </interactant>
    <interactant intactId="EBI-750345">
        <id>Q96HR9</id>
        <label>REEP6</label>
    </interactant>
    <organismsDiffer>false</organismsDiffer>
    <experiments>3</experiments>
</comment>
<comment type="interaction">
    <interactant intactId="EBI-727004">
        <id>O00560</id>
    </interactant>
    <interactant intactId="EBI-14065960">
        <id>Q96HR9-2</id>
        <label>REEP6</label>
    </interactant>
    <organismsDiffer>false</organismsDiffer>
    <experiments>3</experiments>
</comment>
<comment type="interaction">
    <interactant intactId="EBI-727004">
        <id>O00560</id>
    </interactant>
    <interactant intactId="EBI-307352">
        <id>Q04864</id>
        <label>REL</label>
    </interactant>
    <organismsDiffer>false</organismsDiffer>
    <experiments>3</experiments>
</comment>
<comment type="interaction">
    <interactant intactId="EBI-727004">
        <id>O00560</id>
    </interactant>
    <interactant intactId="EBI-9091816">
        <id>Q9NPQ8-4</id>
        <label>RIC8A</label>
    </interactant>
    <organismsDiffer>false</organismsDiffer>
    <experiments>3</experiments>
</comment>
<comment type="interaction">
    <interactant intactId="EBI-727004">
        <id>O00560</id>
    </interactant>
    <interactant intactId="EBI-396669">
        <id>Q9Y3C5</id>
        <label>RNF11</label>
    </interactant>
    <organismsDiffer>false</organismsDiffer>
    <experiments>3</experiments>
</comment>
<comment type="interaction">
    <interactant intactId="EBI-727004">
        <id>O00560</id>
    </interactant>
    <interactant intactId="EBI-1237106">
        <id>P13489</id>
        <label>RNH1</label>
    </interactant>
    <organismsDiffer>false</organismsDiffer>
    <experiments>8</experiments>
</comment>
<comment type="interaction">
    <interactant intactId="EBI-727004">
        <id>O00560</id>
    </interactant>
    <interactant intactId="EBI-1378139">
        <id>Q9HAT0</id>
        <label>ROPN1</label>
    </interactant>
    <organismsDiffer>false</organismsDiffer>
    <experiments>6</experiments>
</comment>
<comment type="interaction">
    <interactant intactId="EBI-727004">
        <id>O00560</id>
    </interactant>
    <interactant intactId="EBI-630339">
        <id>Q8TA86</id>
        <label>RP9</label>
    </interactant>
    <organismsDiffer>false</organismsDiffer>
    <experiments>5</experiments>
</comment>
<comment type="interaction">
    <interactant intactId="EBI-727004">
        <id>O00560</id>
    </interactant>
    <interactant intactId="EBI-744831">
        <id>P49247</id>
        <label>RPIA</label>
    </interactant>
    <organismsDiffer>false</organismsDiffer>
    <experiments>3</experiments>
</comment>
<comment type="interaction">
    <interactant intactId="EBI-727004">
        <id>O00560</id>
    </interactant>
    <interactant intactId="EBI-354533">
        <id>P35268</id>
        <label>RPL22</label>
    </interactant>
    <organismsDiffer>false</organismsDiffer>
    <experiments>5</experiments>
</comment>
<comment type="interaction">
    <interactant intactId="EBI-727004">
        <id>O00560</id>
    </interactant>
    <interactant intactId="EBI-12840198">
        <id>Q96P16-3</id>
        <label>RPRD1A</label>
    </interactant>
    <organismsDiffer>false</organismsDiffer>
    <experiments>3</experiments>
</comment>
<comment type="interaction">
    <interactant intactId="EBI-727004">
        <id>O00560</id>
    </interactant>
    <interactant intactId="EBI-1052363">
        <id>Q9NS64</id>
        <label>RPRM</label>
    </interactant>
    <organismsDiffer>false</organismsDiffer>
    <experiments>3</experiments>
</comment>
<comment type="interaction">
    <interactant intactId="EBI-727004">
        <id>O00560</id>
    </interactant>
    <interactant intactId="EBI-353438">
        <id>P62854</id>
        <label>RPS26</label>
    </interactant>
    <organismsDiffer>false</organismsDiffer>
    <experiments>3</experiments>
</comment>
<comment type="interaction">
    <interactant intactId="EBI-727004">
        <id>O00560</id>
    </interactant>
    <interactant intactId="EBI-2339245">
        <id>P31350</id>
        <label>RRM2</label>
    </interactant>
    <organismsDiffer>false</organismsDiffer>
    <experiments>3</experiments>
</comment>
<comment type="interaction">
    <interactant intactId="EBI-727004">
        <id>O00560</id>
    </interactant>
    <interactant intactId="EBI-749186">
        <id>Q15050</id>
        <label>RRS1</label>
    </interactant>
    <organismsDiffer>false</organismsDiffer>
    <experiments>3</experiments>
</comment>
<comment type="interaction">
    <interactant intactId="EBI-727004">
        <id>O00560</id>
    </interactant>
    <interactant intactId="EBI-10238588">
        <id>Q17RB0</id>
        <label>RTL8B</label>
    </interactant>
    <organismsDiffer>false</organismsDiffer>
    <experiments>3</experiments>
</comment>
<comment type="interaction">
    <interactant intactId="EBI-727004">
        <id>O00560</id>
    </interactant>
    <interactant intactId="EBI-10180131">
        <id>Q16799-3</id>
        <label>RTN1</label>
    </interactant>
    <organismsDiffer>false</organismsDiffer>
    <experiments>3</experiments>
</comment>
<comment type="interaction">
    <interactant intactId="EBI-727004">
        <id>O00560</id>
    </interactant>
    <interactant intactId="EBI-747225">
        <id>Q59EK9</id>
        <label>RUNDC3A</label>
    </interactant>
    <organismsDiffer>false</organismsDiffer>
    <experiments>3</experiments>
</comment>
<comment type="interaction">
    <interactant intactId="EBI-727004">
        <id>O00560</id>
    </interactant>
    <interactant intactId="EBI-11957366">
        <id>Q59EK9-3</id>
        <label>RUNDC3A</label>
    </interactant>
    <organismsDiffer>false</organismsDiffer>
    <experiments>3</experiments>
</comment>
<comment type="interaction">
    <interactant intactId="EBI-727004">
        <id>O00560</id>
    </interactant>
    <interactant intactId="EBI-458391">
        <id>P04271</id>
        <label>S100B</label>
    </interactant>
    <organismsDiffer>false</organismsDiffer>
    <experiments>3</experiments>
</comment>
<comment type="interaction">
    <interactant intactId="EBI-727004">
        <id>O00560</id>
    </interactant>
    <interactant intactId="EBI-12162999">
        <id>Q8WXD2</id>
        <label>SCG3</label>
    </interactant>
    <organismsDiffer>false</organismsDiffer>
    <experiments>3</experiments>
</comment>
<comment type="interaction">
    <interactant intactId="EBI-727004">
        <id>O00560</id>
    </interactant>
    <interactant intactId="EBI-12137487">
        <id>Q9UN30-2</id>
        <label>SCML1</label>
    </interactant>
    <organismsDiffer>false</organismsDiffer>
    <experiments>3</experiments>
</comment>
<comment type="interaction">
    <interactant intactId="EBI-727004">
        <id>O00560</id>
    </interactant>
    <interactant intactId="EBI-727004">
        <id>O00560</id>
        <label>SDCBP</label>
    </interactant>
    <organismsDiffer>false</organismsDiffer>
    <experiments>7</experiments>
</comment>
<comment type="interaction">
    <interactant intactId="EBI-727004">
        <id>O00560</id>
    </interactant>
    <interactant intactId="EBI-693002">
        <id>Q8WYJ6</id>
        <label>SEPTIN1</label>
    </interactant>
    <organismsDiffer>false</organismsDiffer>
    <experiments>3</experiments>
</comment>
<comment type="interaction">
    <interactant intactId="EBI-727004">
        <id>O00560</id>
    </interactant>
    <interactant intactId="EBI-727037">
        <id>Q9UH03</id>
        <label>SEPTIN3</label>
    </interactant>
    <organismsDiffer>false</organismsDiffer>
    <experiments>6</experiments>
</comment>
<comment type="interaction">
    <interactant intactId="EBI-727004">
        <id>O00560</id>
    </interactant>
    <interactant intactId="EBI-1053182">
        <id>Q01105</id>
        <label>SET</label>
    </interactant>
    <organismsDiffer>false</organismsDiffer>
    <experiments>3</experiments>
</comment>
<comment type="interaction">
    <interactant intactId="EBI-727004">
        <id>O00560</id>
    </interactant>
    <interactant intactId="EBI-7481343">
        <id>Q01105-2</id>
        <label>SET</label>
    </interactant>
    <organismsDiffer>false</organismsDiffer>
    <experiments>3</experiments>
</comment>
<comment type="interaction">
    <interactant intactId="EBI-727004">
        <id>O00560</id>
    </interactant>
    <interactant intactId="EBI-2854842">
        <id>Q8WV19</id>
        <label>SFT2D1</label>
    </interactant>
    <organismsDiffer>false</organismsDiffer>
    <experiments>3</experiments>
</comment>
<comment type="interaction">
    <interactant intactId="EBI-727004">
        <id>O00560</id>
    </interactant>
    <interactant intactId="EBI-747107">
        <id>Q8IUQ4</id>
        <label>SIAH1</label>
    </interactant>
    <organismsDiffer>false</organismsDiffer>
    <experiments>3</experiments>
</comment>
<comment type="interaction">
    <interactant intactId="EBI-727004">
        <id>O00560</id>
    </interactant>
    <interactant intactId="EBI-8634123">
        <id>Q9BRV3</id>
        <label>SLC50A1</label>
    </interactant>
    <organismsDiffer>false</organismsDiffer>
    <experiments>3</experiments>
</comment>
<comment type="interaction">
    <interactant intactId="EBI-727004">
        <id>O00560</id>
    </interactant>
    <interactant intactId="EBI-679562">
        <id>P51531</id>
        <label>SMARCA2</label>
    </interactant>
    <organismsDiffer>false</organismsDiffer>
    <experiments>2</experiments>
</comment>
<comment type="interaction">
    <interactant intactId="EBI-727004">
        <id>O00560</id>
    </interactant>
    <interactant intactId="EBI-10212306">
        <id>P51531-2</id>
        <label>SMARCA2</label>
    </interactant>
    <organismsDiffer>false</organismsDiffer>
    <experiments>3</experiments>
</comment>
<comment type="interaction">
    <interactant intactId="EBI-727004">
        <id>O00560</id>
    </interactant>
    <interactant intactId="EBI-985879">
        <id>P37840</id>
        <label>SNCA</label>
    </interactant>
    <organismsDiffer>false</organismsDiffer>
    <experiments>3</experiments>
</comment>
<comment type="interaction">
    <interactant intactId="EBI-727004">
        <id>O00560</id>
    </interactant>
    <interactant intactId="EBI-607085">
        <id>P09012</id>
        <label>SNRPA</label>
    </interactant>
    <organismsDiffer>false</organismsDiffer>
    <experiments>3</experiments>
</comment>
<comment type="interaction">
    <interactant intactId="EBI-727004">
        <id>O00560</id>
    </interactant>
    <interactant intactId="EBI-2822329">
        <id>Q13596</id>
        <label>SNX1</label>
    </interactant>
    <organismsDiffer>false</organismsDiffer>
    <experiments>3</experiments>
</comment>
<comment type="interaction">
    <interactant intactId="EBI-727004">
        <id>O00560</id>
    </interactant>
    <interactant intactId="EBI-12037215">
        <id>Q5MJ09</id>
        <label>SPANXN3</label>
    </interactant>
    <organismsDiffer>false</organismsDiffer>
    <experiments>3</experiments>
</comment>
<comment type="interaction">
    <interactant intactId="EBI-727004">
        <id>O00560</id>
    </interactant>
    <interactant intactId="EBI-5235340">
        <id>Q7Z699</id>
        <label>SPRED1</label>
    </interactant>
    <organismsDiffer>false</organismsDiffer>
    <experiments>3</experiments>
</comment>
<comment type="interaction">
    <interactant intactId="EBI-727004">
        <id>O00560</id>
    </interactant>
    <interactant intactId="EBI-621482">
        <id>P12931</id>
        <label>SRC</label>
    </interactant>
    <organismsDiffer>false</organismsDiffer>
    <experiments>2</experiments>
</comment>
<comment type="interaction">
    <interactant intactId="EBI-727004">
        <id>O00560</id>
    </interactant>
    <interactant intactId="EBI-10268630">
        <id>Q8N9Q2</id>
        <label>SREK1IP1</label>
    </interactant>
    <organismsDiffer>false</organismsDiffer>
    <experiments>6</experiments>
</comment>
<comment type="interaction">
    <interactant intactId="EBI-727004">
        <id>O00560</id>
    </interactant>
    <interactant intactId="EBI-1051785">
        <id>Q05519</id>
        <label>SRSF11</label>
    </interactant>
    <organismsDiffer>false</organismsDiffer>
    <experiments>3</experiments>
</comment>
<comment type="interaction">
    <interactant intactId="EBI-727004">
        <id>O00560</id>
    </interactant>
    <interactant intactId="EBI-11975029">
        <id>Q05519-2</id>
        <label>SRSF11</label>
    </interactant>
    <organismsDiffer>false</organismsDiffer>
    <experiments>3</experiments>
</comment>
<comment type="interaction">
    <interactant intactId="EBI-727004">
        <id>O00560</id>
    </interactant>
    <interactant intactId="EBI-372557">
        <id>P84103</id>
        <label>SRSF3</label>
    </interactant>
    <organismsDiffer>false</organismsDiffer>
    <experiments>3</experiments>
</comment>
<comment type="interaction">
    <interactant intactId="EBI-727004">
        <id>O00560</id>
    </interactant>
    <interactant intactId="EBI-398885">
        <id>Q16629</id>
        <label>SRSF7</label>
    </interactant>
    <organismsDiffer>false</organismsDiffer>
    <experiments>6</experiments>
</comment>
<comment type="interaction">
    <interactant intactId="EBI-727004">
        <id>O00560</id>
    </interactant>
    <interactant intactId="EBI-10172867">
        <id>A1L4H1</id>
        <label>SSC5D</label>
    </interactant>
    <organismsDiffer>false</organismsDiffer>
    <experiments>3</experiments>
</comment>
<comment type="interaction">
    <interactant intactId="EBI-727004">
        <id>O00560</id>
    </interactant>
    <interactant intactId="EBI-2515299">
        <id>O43805</id>
        <label>SSNA1</label>
    </interactant>
    <organismsDiffer>false</organismsDiffer>
    <experiments>6</experiments>
</comment>
<comment type="interaction">
    <interactant intactId="EBI-727004">
        <id>O00560</id>
    </interactant>
    <interactant intactId="EBI-998260">
        <id>P53999</id>
        <label>SUB1</label>
    </interactant>
    <organismsDiffer>false</organismsDiffer>
    <experiments>3</experiments>
</comment>
<comment type="interaction">
    <interactant intactId="EBI-727004">
        <id>O00560</id>
    </interactant>
    <interactant intactId="EBI-10179062">
        <id>O43704</id>
        <label>SULT1B1</label>
    </interactant>
    <organismsDiffer>false</organismsDiffer>
    <experiments>3</experiments>
</comment>
<comment type="interaction">
    <interactant intactId="EBI-727004">
        <id>O00560</id>
    </interactant>
    <interactant intactId="EBI-12187159">
        <id>O43759-2</id>
        <label>SYNGR1</label>
    </interactant>
    <organismsDiffer>false</organismsDiffer>
    <experiments>3</experiments>
</comment>
<comment type="interaction">
    <interactant intactId="EBI-727004">
        <id>O00560</id>
    </interactant>
    <interactant intactId="EBI-2800683">
        <id>Q16563</id>
        <label>SYPL1</label>
    </interactant>
    <organismsDiffer>false</organismsDiffer>
    <experiments>3</experiments>
</comment>
<comment type="interaction">
    <interactant intactId="EBI-727004">
        <id>O00560</id>
    </interactant>
    <interactant intactId="EBI-13075176">
        <id>Q8N2H4</id>
        <label>SYS1</label>
    </interactant>
    <organismsDiffer>false</organismsDiffer>
    <experiments>3</experiments>
</comment>
<comment type="interaction">
    <interactant intactId="EBI-727004">
        <id>O00560</id>
    </interactant>
    <interactant intactId="EBI-723267">
        <id>O43680</id>
        <label>TCF21</label>
    </interactant>
    <organismsDiffer>false</organismsDiffer>
    <experiments>3</experiments>
</comment>
<comment type="interaction">
    <interactant intactId="EBI-727004">
        <id>O00560</id>
    </interactant>
    <interactant intactId="EBI-13636688">
        <id>P15884-3</id>
        <label>TCF4</label>
    </interactant>
    <organismsDiffer>false</organismsDiffer>
    <experiments>3</experiments>
</comment>
<comment type="interaction">
    <interactant intactId="EBI-727004">
        <id>O00560</id>
    </interactant>
    <interactant intactId="EBI-743494">
        <id>P48775</id>
        <label>TDO2</label>
    </interactant>
    <organismsDiffer>false</organismsDiffer>
    <experiments>7</experiments>
</comment>
<comment type="interaction">
    <interactant intactId="EBI-727004">
        <id>O00560</id>
    </interactant>
    <interactant intactId="EBI-10180409">
        <id>Q969V4</id>
        <label>TEKT1</label>
    </interactant>
    <organismsDiffer>false</organismsDiffer>
    <experiments>3</experiments>
</comment>
<comment type="interaction">
    <interactant intactId="EBI-727004">
        <id>O00560</id>
    </interactant>
    <interactant intactId="EBI-717422">
        <id>Q12800</id>
        <label>TFCP2</label>
    </interactant>
    <organismsDiffer>false</organismsDiffer>
    <experiments>3</experiments>
</comment>
<comment type="interaction">
    <interactant intactId="EBI-727004">
        <id>O00560</id>
    </interactant>
    <interactant intactId="EBI-746510">
        <id>Q9NWX6</id>
        <label>THG1L</label>
    </interactant>
    <organismsDiffer>false</organismsDiffer>
    <experiments>3</experiments>
</comment>
<comment type="interaction">
    <interactant intactId="EBI-727004">
        <id>O00560</id>
    </interactant>
    <interactant intactId="EBI-740711">
        <id>Q96CG3</id>
        <label>TIFA</label>
    </interactant>
    <organismsDiffer>false</organismsDiffer>
    <experiments>8</experiments>
</comment>
<comment type="interaction">
    <interactant intactId="EBI-727004">
        <id>O00560</id>
    </interactant>
    <interactant intactId="EBI-4291069">
        <id>Q3LXA3</id>
        <label>TKFC</label>
    </interactant>
    <organismsDiffer>false</organismsDiffer>
    <experiments>3</experiments>
</comment>
<comment type="interaction">
    <interactant intactId="EBI-727004">
        <id>O00560</id>
    </interactant>
    <interactant intactId="EBI-717810">
        <id>Q08117</id>
        <label>TLE5</label>
    </interactant>
    <organismsDiffer>false</organismsDiffer>
    <experiments>3</experiments>
</comment>
<comment type="interaction">
    <interactant intactId="EBI-727004">
        <id>O00560</id>
    </interactant>
    <interactant intactId="EBI-12807858">
        <id>Q7Z6W1</id>
        <label>TMCO2</label>
    </interactant>
    <organismsDiffer>false</organismsDiffer>
    <experiments>3</experiments>
</comment>
<comment type="interaction">
    <interactant intactId="EBI-727004">
        <id>O00560</id>
    </interactant>
    <interactant intactId="EBI-11343485">
        <id>Q86X19</id>
        <label>TMEM17</label>
    </interactant>
    <organismsDiffer>false</organismsDiffer>
    <experiments>3</experiments>
</comment>
<comment type="interaction">
    <interactant intactId="EBI-727004">
        <id>O00560</id>
    </interactant>
    <interactant intactId="EBI-9675724">
        <id>Q8WW34</id>
        <label>TMEM239</label>
    </interactant>
    <organismsDiffer>false</organismsDiffer>
    <experiments>3</experiments>
</comment>
<comment type="interaction">
    <interactant intactId="EBI-727004">
        <id>O00560</id>
    </interactant>
    <interactant intactId="EBI-11528917">
        <id>Q8WW34-2</id>
        <label>TMEM239</label>
    </interactant>
    <organismsDiffer>false</organismsDiffer>
    <experiments>3</experiments>
</comment>
<comment type="interaction">
    <interactant intactId="EBI-727004">
        <id>O00560</id>
    </interactant>
    <interactant intactId="EBI-11997340">
        <id>P0DTL5</id>
        <label>TMEM276</label>
    </interactant>
    <organismsDiffer>false</organismsDiffer>
    <experiments>3</experiments>
</comment>
<comment type="interaction">
    <interactant intactId="EBI-727004">
        <id>O00560</id>
    </interactant>
    <interactant intactId="EBI-1049336">
        <id>O95379</id>
        <label>TNFAIP8</label>
    </interactant>
    <organismsDiffer>false</organismsDiffer>
    <experiments>6</experiments>
</comment>
<comment type="interaction">
    <interactant intactId="EBI-727004">
        <id>O00560</id>
    </interactant>
    <interactant intactId="EBI-14222571">
        <id>Q5GJ75</id>
        <label>TNFAIP8L3</label>
    </interactant>
    <organismsDiffer>false</organismsDiffer>
    <experiments>3</experiments>
</comment>
<comment type="interaction">
    <interactant intactId="EBI-727004">
        <id>O00560</id>
    </interactant>
    <interactant intactId="EBI-1105254">
        <id>O95271</id>
        <label>TNKS</label>
    </interactant>
    <organismsDiffer>false</organismsDiffer>
    <experiments>5</experiments>
</comment>
<comment type="interaction">
    <interactant intactId="EBI-727004">
        <id>O00560</id>
    </interactant>
    <interactant intactId="EBI-523498">
        <id>O00463</id>
        <label>TRAF5</label>
    </interactant>
    <organismsDiffer>false</organismsDiffer>
    <experiments>8</experiments>
</comment>
<comment type="interaction">
    <interactant intactId="EBI-727004">
        <id>O00560</id>
    </interactant>
    <interactant intactId="EBI-719493">
        <id>P14373</id>
        <label>TRIM27</label>
    </interactant>
    <organismsDiffer>false</organismsDiffer>
    <experiments>3</experiments>
</comment>
<comment type="interaction">
    <interactant intactId="EBI-727004">
        <id>O00560</id>
    </interactant>
    <interactant intactId="EBI-742790">
        <id>Q13049</id>
        <label>TRIM32</label>
    </interactant>
    <organismsDiffer>false</organismsDiffer>
    <experiments>7</experiments>
</comment>
<comment type="interaction">
    <interactant intactId="EBI-727004">
        <id>O00560</id>
    </interactant>
    <interactant intactId="EBI-2130415">
        <id>O00635</id>
        <label>TRIM38</label>
    </interactant>
    <organismsDiffer>false</organismsDiffer>
    <experiments>3</experiments>
</comment>
<comment type="interaction">
    <interactant intactId="EBI-727004">
        <id>O00560</id>
    </interactant>
    <interactant intactId="EBI-2130429">
        <id>Q9BYV2</id>
        <label>TRIM54</label>
    </interactant>
    <organismsDiffer>false</organismsDiffer>
    <experiments>6</experiments>
</comment>
<comment type="interaction">
    <interactant intactId="EBI-727004">
        <id>O00560</id>
    </interactant>
    <interactant intactId="EBI-358993">
        <id>Q15645</id>
        <label>TRIP13</label>
    </interactant>
    <organismsDiffer>false</organismsDiffer>
    <experiments>3</experiments>
</comment>
<comment type="interaction">
    <interactant intactId="EBI-727004">
        <id>O00560</id>
    </interactant>
    <interactant intactId="EBI-12806590">
        <id>Q86WV8</id>
        <label>TSC1</label>
    </interactant>
    <organismsDiffer>false</organismsDiffer>
    <experiments>3</experiments>
</comment>
<comment type="interaction">
    <interactant intactId="EBI-727004">
        <id>O00560</id>
    </interactant>
    <interactant intactId="EBI-1044160">
        <id>Q15631</id>
        <label>TSN</label>
    </interactant>
    <organismsDiffer>false</organismsDiffer>
    <experiments>3</experiments>
</comment>
<comment type="interaction">
    <interactant intactId="EBI-727004">
        <id>O00560</id>
    </interactant>
    <interactant intactId="EBI-11988865">
        <id>A5PKU2</id>
        <label>TUSC5</label>
    </interactant>
    <organismsDiffer>false</organismsDiffer>
    <experiments>3</experiments>
</comment>
<comment type="interaction">
    <interactant intactId="EBI-727004">
        <id>O00560</id>
    </interactant>
    <interactant intactId="EBI-413034">
        <id>P0CG47</id>
        <label>UBB</label>
    </interactant>
    <organismsDiffer>false</organismsDiffer>
    <experiments>3</experiments>
</comment>
<comment type="interaction">
    <interactant intactId="EBI-727004">
        <id>O00560</id>
    </interactant>
    <interactant intactId="EBI-2339348">
        <id>P49459</id>
        <label>UBE2A</label>
    </interactant>
    <organismsDiffer>false</organismsDiffer>
    <experiments>9</experiments>
</comment>
<comment type="interaction">
    <interactant intactId="EBI-727004">
        <id>O00560</id>
    </interactant>
    <interactant intactId="EBI-473850">
        <id>P61086</id>
        <label>UBE2K</label>
    </interactant>
    <organismsDiffer>false</organismsDiffer>
    <experiments>3</experiments>
</comment>
<comment type="interaction">
    <interactant intactId="EBI-727004">
        <id>O00560</id>
    </interactant>
    <interactant intactId="EBI-2340879">
        <id>Q712K3</id>
        <label>UBE2R2</label>
    </interactant>
    <organismsDiffer>false</organismsDiffer>
    <experiments>3</experiments>
</comment>
<comment type="interaction">
    <interactant intactId="EBI-727004">
        <id>O00560</id>
    </interactant>
    <interactant intactId="EBI-1188298">
        <id>O95292</id>
        <label>VAPB</label>
    </interactant>
    <organismsDiffer>false</organismsDiffer>
    <experiments>3</experiments>
</comment>
<comment type="interaction">
    <interactant intactId="EBI-727004">
        <id>O00560</id>
    </interactant>
    <interactant intactId="EBI-712969">
        <id>Q9Y3C0</id>
        <label>WASHC3</label>
    </interactant>
    <organismsDiffer>false</organismsDiffer>
    <experiments>6</experiments>
</comment>
<comment type="interaction">
    <interactant intactId="EBI-727004">
        <id>O00560</id>
    </interactant>
    <interactant intactId="EBI-957615">
        <id>O00401</id>
        <label>WASL</label>
    </interactant>
    <organismsDiffer>false</organismsDiffer>
    <experiments>6</experiments>
</comment>
<comment type="interaction">
    <interactant intactId="EBI-727004">
        <id>O00560</id>
    </interactant>
    <interactant intactId="EBI-720609">
        <id>O76024</id>
        <label>WFS1</label>
    </interactant>
    <organismsDiffer>false</organismsDiffer>
    <experiments>3</experiments>
</comment>
<comment type="interaction">
    <interactant intactId="EBI-727004">
        <id>O00560</id>
    </interactant>
    <interactant intactId="EBI-2799703">
        <id>O95070</id>
        <label>YIF1A</label>
    </interactant>
    <organismsDiffer>false</organismsDiffer>
    <experiments>3</experiments>
</comment>
<comment type="interaction">
    <interactant intactId="EBI-727004">
        <id>O00560</id>
    </interactant>
    <interactant intactId="EBI-10176632">
        <id>O43829</id>
        <label>ZBTB14</label>
    </interactant>
    <organismsDiffer>false</organismsDiffer>
    <experiments>3</experiments>
</comment>
<comment type="interaction">
    <interactant intactId="EBI-727004">
        <id>O00560</id>
    </interactant>
    <interactant intactId="EBI-742740">
        <id>Q96BR9</id>
        <label>ZBTB8A</label>
    </interactant>
    <organismsDiffer>false</organismsDiffer>
    <experiments>6</experiments>
</comment>
<comment type="interaction">
    <interactant intactId="EBI-727004">
        <id>O00560</id>
    </interactant>
    <interactant intactId="EBI-597063">
        <id>Q8TBK6</id>
        <label>ZCCHC10</label>
    </interactant>
    <organismsDiffer>false</organismsDiffer>
    <experiments>3</experiments>
</comment>
<comment type="interaction">
    <interactant intactId="EBI-727004">
        <id>O00560</id>
    </interactant>
    <interactant intactId="EBI-746345">
        <id>Q9NP64</id>
        <label>ZCCHC17</label>
    </interactant>
    <organismsDiffer>false</organismsDiffer>
    <experiments>8</experiments>
</comment>
<comment type="interaction">
    <interactant intactId="EBI-727004">
        <id>O00560</id>
    </interactant>
    <interactant intactId="EBI-12030590">
        <id>Q9H0C1</id>
        <label>ZMYND12</label>
    </interactant>
    <organismsDiffer>false</organismsDiffer>
    <experiments>3</experiments>
</comment>
<comment type="interaction">
    <interactant intactId="EBI-727004">
        <id>O00560</id>
    </interactant>
    <interactant intactId="EBI-10252492">
        <id>Q6P1L6</id>
        <label>ZNF343</label>
    </interactant>
    <organismsDiffer>false</organismsDiffer>
    <experiments>3</experiments>
</comment>
<comment type="interaction">
    <interactant intactId="EBI-727004">
        <id>O00560</id>
    </interactant>
    <interactant intactId="EBI-12901093">
        <id>Q8NCK3</id>
        <label>ZNF485</label>
    </interactant>
    <organismsDiffer>false</organismsDiffer>
    <experiments>3</experiments>
</comment>
<comment type="interaction">
    <interactant intactId="EBI-727004">
        <id>O00560</id>
    </interactant>
    <interactant intactId="EBI-12376497">
        <id>Q6AZW8</id>
        <label>ZNF660</label>
    </interactant>
    <organismsDiffer>false</organismsDiffer>
    <experiments>3</experiments>
</comment>
<comment type="interaction">
    <interactant intactId="EBI-727004">
        <id>O00560</id>
    </interactant>
    <interactant intactId="EBI-1210580">
        <id>Q9H5H4</id>
        <label>ZNF768</label>
    </interactant>
    <organismsDiffer>false</organismsDiffer>
    <experiments>3</experiments>
</comment>
<comment type="interaction">
    <interactant intactId="EBI-727004">
        <id>O00560</id>
    </interactant>
    <interactant intactId="EBI-527853">
        <id>Q9UGI0</id>
        <label>ZRANB1</label>
    </interactant>
    <organismsDiffer>false</organismsDiffer>
    <experiments>3</experiments>
</comment>
<comment type="interaction">
    <interactant intactId="EBI-727004">
        <id>O00560</id>
    </interactant>
    <interactant intactId="EBI-5667532">
        <id>Q3MJ62</id>
        <label>ZSCAN23</label>
    </interactant>
    <organismsDiffer>false</organismsDiffer>
    <experiments>3</experiments>
</comment>
<comment type="interaction">
    <interactant intactId="EBI-9640690">
        <id>O00560-1</id>
    </interactant>
    <interactant intactId="EBI-25487741">
        <id>P59637</id>
        <label>E</label>
    </interactant>
    <organismsDiffer>true</organismsDiffer>
    <experiments>4</experiments>
</comment>
<comment type="subcellular location">
    <subcellularLocation>
        <location evidence="6">Cell junction</location>
        <location evidence="6">Focal adhesion</location>
    </subcellularLocation>
    <subcellularLocation>
        <location evidence="6">Cell junction</location>
        <location evidence="6">Adherens junction</location>
    </subcellularLocation>
    <subcellularLocation>
        <location evidence="6 11 13">Cell membrane</location>
        <topology evidence="6 13">Peripheral membrane protein</topology>
    </subcellularLocation>
    <subcellularLocation>
        <location evidence="9">Endoplasmic reticulum membrane</location>
        <topology evidence="9">Peripheral membrane protein</topology>
    </subcellularLocation>
    <subcellularLocation>
        <location evidence="6">Nucleus</location>
    </subcellularLocation>
    <subcellularLocation>
        <location evidence="8 9">Melanosome</location>
    </subcellularLocation>
    <subcellularLocation>
        <location evidence="6">Cytoplasm</location>
        <location evidence="6">Cytosol</location>
    </subcellularLocation>
    <subcellularLocation>
        <location evidence="6">Cytoplasm</location>
        <location evidence="6">Cytoskeleton</location>
    </subcellularLocation>
    <subcellularLocation>
        <location evidence="10">Secreted</location>
        <location evidence="10">Extracellular exosome</location>
    </subcellularLocation>
    <subcellularLocation>
        <location evidence="11">Membrane raft</location>
    </subcellularLocation>
    <text evidence="6 8 9 13">Mainly membrane-associated. Localized to adherens junctions, focal adhesions and endoplasmic reticulum. Colocalized with actin stress fibers. Also found in the nucleus. Identified by mass spectrometry in melanosome fractions from stage I to stage IV. Associated to the plasma membrane in the presence of FZD7 and phosphatidylinositol 4,5-bisphosphate (PIP2) (PubMed:27386966).</text>
</comment>
<comment type="alternative products">
    <event type="alternative splicing"/>
    <isoform>
        <id>O00560-1</id>
        <name>1</name>
        <sequence type="displayed"/>
    </isoform>
    <isoform>
        <id>O00560-2</id>
        <name>2</name>
        <sequence type="described" ref="VSP_038375"/>
    </isoform>
    <isoform>
        <id>O00560-3</id>
        <name>3</name>
        <sequence type="described" ref="VSP_038374"/>
    </isoform>
</comment>
<comment type="tissue specificity">
    <text evidence="11">Expressed in lung cancers, including adenocarcinoma, squamous cell carcinoma and small-cell carcinoma (at protein level) (PubMed:25893292). Widely expressed. Expressed in fetal kidney, liver, lung and brain. In adult highest expression in heart and placenta.</text>
</comment>
<comment type="induction">
    <text>By IFNG/IFN-gamma in melanoma cells.</text>
</comment>
<comment type="PTM">
    <text>Phosphorylated on tyrosine residues.</text>
</comment>
<comment type="online information" name="Atlas of Genetics and Cytogenetics in Oncology and Haematology">
    <link uri="https://atlasgeneticsoncology.org/gene/44377/SDCBP"/>
</comment>
<keyword id="KW-0002">3D-structure</keyword>
<keyword id="KW-0007">Acetylation</keyword>
<keyword id="KW-0025">Alternative splicing</keyword>
<keyword id="KW-0965">Cell junction</keyword>
<keyword id="KW-1003">Cell membrane</keyword>
<keyword id="KW-0963">Cytoplasm</keyword>
<keyword id="KW-0206">Cytoskeleton</keyword>
<keyword id="KW-0903">Direct protein sequencing</keyword>
<keyword id="KW-0256">Endoplasmic reticulum</keyword>
<keyword id="KW-0446">Lipid-binding</keyword>
<keyword id="KW-0472">Membrane</keyword>
<keyword id="KW-0539">Nucleus</keyword>
<keyword id="KW-0597">Phosphoprotein</keyword>
<keyword id="KW-1267">Proteomics identification</keyword>
<keyword id="KW-1185">Reference proteome</keyword>
<keyword id="KW-0677">Repeat</keyword>
<keyword id="KW-0964">Secreted</keyword>
<protein>
    <recommendedName>
        <fullName>Syntenin-1</fullName>
    </recommendedName>
    <alternativeName>
        <fullName>Melanoma differentiation-associated protein 9</fullName>
        <shortName>MDA-9</shortName>
    </alternativeName>
    <alternativeName>
        <fullName>Pro-TGF-alpha cytoplasmic domain-interacting protein 18</fullName>
        <shortName>TACIP18</shortName>
    </alternativeName>
    <alternativeName>
        <fullName>Scaffold protein Pbp1</fullName>
    </alternativeName>
    <alternativeName>
        <fullName>Syndecan-binding protein 1</fullName>
    </alternativeName>
</protein>
<sequence>MSLYPSLEDLKVDKVIQAQTAFSANPANPAILSEASAPIPHDGNLYPRLYPELSQYMGLSLNEEEIRANVAVVSGAPLQGQLVARPSSINYMVAPVTGNDVGIRRAEIKQGIREVILCKDQDGKIGLRLKSIDNGIFVQLVQANSPASLVGLRFGDQVLQINGENCAGWSSDKAHKVLKQAFGEKITMTIRDRPFERTITMHKDSTGHVGFIFKNGKITSIVKDSSAARNGLLTEHNICEINGQNVIGLKDSQIADILSTSGTVVTITIMPAFIFEHIIKRMAPSIMKSLMDHTIPEV</sequence>
<name>SDCB1_HUMAN</name>
<accession>O00560</accession>
<accession>B2R5Q7</accession>
<accession>B4DUH3</accession>
<accession>B7ZLN2</accession>
<accession>O00173</accession>
<accession>O43391</accession>
<accession>Q14CP2</accession>
<organism>
    <name type="scientific">Homo sapiens</name>
    <name type="common">Human</name>
    <dbReference type="NCBI Taxonomy" id="9606"/>
    <lineage>
        <taxon>Eukaryota</taxon>
        <taxon>Metazoa</taxon>
        <taxon>Chordata</taxon>
        <taxon>Craniata</taxon>
        <taxon>Vertebrata</taxon>
        <taxon>Euteleostomi</taxon>
        <taxon>Mammalia</taxon>
        <taxon>Eutheria</taxon>
        <taxon>Euarchontoglires</taxon>
        <taxon>Primates</taxon>
        <taxon>Haplorrhini</taxon>
        <taxon>Catarrhini</taxon>
        <taxon>Hominidae</taxon>
        <taxon>Homo</taxon>
    </lineage>
</organism>
<gene>
    <name type="primary">SDCBP</name>
    <name type="synonym">MDA9</name>
    <name type="synonym">SYCL</name>
</gene>
<proteinExistence type="evidence at protein level"/>
<feature type="initiator methionine" description="Removed" evidence="15 21">
    <location>
        <position position="1"/>
    </location>
</feature>
<feature type="chain" id="PRO_0000184001" description="Syntenin-1">
    <location>
        <begin position="2"/>
        <end position="298"/>
    </location>
</feature>
<feature type="domain" description="PDZ 1" evidence="3">
    <location>
        <begin position="114"/>
        <end position="193"/>
    </location>
</feature>
<feature type="domain" description="PDZ 2" evidence="3">
    <location>
        <begin position="198"/>
        <end position="273"/>
    </location>
</feature>
<feature type="region of interest" description="Interaction with PDCD6IP" evidence="10">
    <location>
        <begin position="2"/>
        <end position="60"/>
    </location>
</feature>
<feature type="short sequence motif" description="LYPX(n)L motif 1" evidence="1">
    <location>
        <begin position="3"/>
        <end position="7"/>
    </location>
</feature>
<feature type="short sequence motif" description="LYPX(n)L motif 2" evidence="1">
    <location>
        <begin position="45"/>
        <end position="49"/>
    </location>
</feature>
<feature type="short sequence motif" description="LYPX(n)L motif 3" evidence="1">
    <location>
        <begin position="49"/>
        <end position="53"/>
    </location>
</feature>
<feature type="binding site" evidence="13 20">
    <location>
        <position position="215"/>
    </location>
    <ligand>
        <name>a 1,2-diacyl-sn-glycero-3-phospho-(1D-myo-inositol-4,5-bisphosphate)</name>
        <dbReference type="ChEBI" id="CHEBI:58456"/>
    </ligand>
</feature>
<feature type="binding site" evidence="13 20">
    <location>
        <begin position="250"/>
        <end position="251"/>
    </location>
    <ligand>
        <name>a 1,2-diacyl-sn-glycero-3-phospho-(1D-myo-inositol-4,5-bisphosphate)</name>
        <dbReference type="ChEBI" id="CHEBI:58456"/>
    </ligand>
</feature>
<feature type="modified residue" description="N-acetylserine" evidence="15 21">
    <location>
        <position position="2"/>
    </location>
</feature>
<feature type="modified residue" description="Phosphoserine" evidence="22">
    <location>
        <position position="6"/>
    </location>
</feature>
<feature type="modified residue" description="Phosphotyrosine" evidence="23">
    <location>
        <position position="46"/>
    </location>
</feature>
<feature type="splice variant" id="VSP_038374" description="In isoform 3." evidence="16">
    <location>
        <begin position="12"/>
        <end position="17"/>
    </location>
</feature>
<feature type="splice variant" id="VSP_038375" description="In isoform 2." evidence="17">
    <location>
        <position position="81"/>
    </location>
</feature>
<feature type="sequence variant" id="VAR_013160" description="In dbSNP:rs1127509." evidence="14">
    <original>N</original>
    <variation>S</variation>
    <location>
        <position position="69"/>
    </location>
</feature>
<feature type="mutagenesis site" description="Disruption of the cooperative binding of C-terminal peptides from FZD7 and phosphatidylinositol-4,5-bisphosphate. Impaired interaction with FZD7 and disruption of the cooperative binding of C-terminal peptides from FZD7 and phosphatidylinositol-4,5-bisphosphate; when associated with A-250." evidence="13">
    <original>K</original>
    <variation>A</variation>
    <location>
        <position position="214"/>
    </location>
</feature>
<feature type="mutagenesis site" description="Disruption of the cooperative binding of C-terminal peptides from FZD7 and phosphatidylinositol-4,5-bisphosphate." evidence="13">
    <original>N</original>
    <variation>D</variation>
    <location>
        <position position="215"/>
    </location>
</feature>
<feature type="mutagenesis site" description="Disruption of the cooperative binding of C-terminal peptides from FZD7 and phosphatidylinositol-4,5-bisphosphate. Impaired interaction with FZD7 and disruption of the cooperative binding of C-terminal peptides from FZD7 and phosphatidylinositol-4,5-bisphosphate; when associated with A-214." evidence="13">
    <original>K</original>
    <variation>A</variation>
    <location>
        <position position="250"/>
    </location>
</feature>
<feature type="sequence conflict" description="In Ref. 2; AAB51246." evidence="19" ref="2">
    <original>N</original>
    <variation>S</variation>
    <location>
        <position position="62"/>
    </location>
</feature>
<feature type="strand" evidence="29">
    <location>
        <begin position="111"/>
        <end position="117"/>
    </location>
</feature>
<feature type="turn" evidence="28">
    <location>
        <begin position="121"/>
        <end position="123"/>
    </location>
</feature>
<feature type="strand" evidence="29">
    <location>
        <begin position="127"/>
        <end position="132"/>
    </location>
</feature>
<feature type="strand" evidence="29">
    <location>
        <begin position="135"/>
        <end position="142"/>
    </location>
</feature>
<feature type="helix" evidence="29">
    <location>
        <begin position="146"/>
        <end position="149"/>
    </location>
</feature>
<feature type="strand" evidence="29">
    <location>
        <begin position="157"/>
        <end position="161"/>
    </location>
</feature>
<feature type="helix" evidence="29">
    <location>
        <begin position="171"/>
        <end position="180"/>
    </location>
</feature>
<feature type="strand" evidence="29">
    <location>
        <begin position="186"/>
        <end position="191"/>
    </location>
</feature>
<feature type="strand" evidence="25">
    <location>
        <begin position="197"/>
        <end position="202"/>
    </location>
</feature>
<feature type="strand" evidence="24">
    <location>
        <begin position="205"/>
        <end position="208"/>
    </location>
</feature>
<feature type="strand" evidence="25">
    <location>
        <begin position="211"/>
        <end position="214"/>
    </location>
</feature>
<feature type="strand" evidence="25">
    <location>
        <begin position="217"/>
        <end position="221"/>
    </location>
</feature>
<feature type="strand" evidence="26">
    <location>
        <begin position="223"/>
        <end position="225"/>
    </location>
</feature>
<feature type="helix" evidence="25">
    <location>
        <begin position="226"/>
        <end position="230"/>
    </location>
</feature>
<feature type="strand" evidence="25">
    <location>
        <begin position="234"/>
        <end position="241"/>
    </location>
</feature>
<feature type="strand" evidence="27">
    <location>
        <begin position="247"/>
        <end position="249"/>
    </location>
</feature>
<feature type="helix" evidence="25">
    <location>
        <begin position="251"/>
        <end position="260"/>
    </location>
</feature>
<feature type="strand" evidence="25">
    <location>
        <begin position="263"/>
        <end position="271"/>
    </location>
</feature>
<feature type="helix" evidence="29">
    <location>
        <begin position="272"/>
        <end position="279"/>
    </location>
</feature>
<feature type="strand" evidence="26">
    <location>
        <begin position="280"/>
        <end position="282"/>
    </location>
</feature>
<feature type="helix" evidence="29">
    <location>
        <begin position="284"/>
        <end position="290"/>
    </location>
</feature>